<proteinExistence type="evidence at protein level"/>
<reference key="1">
    <citation type="journal article" date="1993" name="Cell">
        <title>Identification and characterization of the tuberous sclerosis gene on chromosome 16.</title>
        <authorList>
            <consortium name="The European chromosome 16 tuberous sclerosis consortium"/>
            <person name="Nellist M."/>
            <person name="Janssen B."/>
            <person name="Brook-Carter P.T."/>
            <person name="Hesseling-Janssen A.L.W."/>
            <person name="Maheshwar M.M."/>
            <person name="Verhoef S."/>
            <person name="van den Ouweland A.M.W."/>
            <person name="Lindhout D."/>
            <person name="Eussen B."/>
            <person name="Cordeiro I."/>
            <person name="Santos H."/>
            <person name="Halley D.J.J."/>
            <person name="Sampson J.R."/>
            <person name="Ward C.J."/>
            <person name="Peral B."/>
            <person name="Thomas S."/>
            <person name="Hughes J."/>
            <person name="Harris P.C."/>
            <person name="Roelfsema J.H."/>
            <person name="Saris J.J."/>
            <person name="Spruit L."/>
            <person name="Peters D.J.M."/>
            <person name="Dauwerse J.G."/>
            <person name="Breuning M.H."/>
        </authorList>
    </citation>
    <scope>NUCLEOTIDE SEQUENCE [MRNA] (ISOFORM 1)</scope>
    <scope>TISSUE SPECIFICITY</scope>
    <scope>VARIANT ARG-802</scope>
    <source>
        <tissue>Brain</tissue>
    </source>
</reference>
<reference key="2">
    <citation type="submission" date="1998-12" db="EMBL/GenBank/DDBJ databases">
        <authorList>
            <person name="Sampson J.R."/>
        </authorList>
    </citation>
    <scope>SEQUENCE REVISION</scope>
</reference>
<reference key="3">
    <citation type="journal article" date="1995" name="Genomics">
        <title>Alternative splicing of the tuberous sclerosis 2 (TSC2) gene in human and mouse tissues.</title>
        <authorList>
            <person name="Xu L."/>
            <person name="Sterner C."/>
            <person name="Maheshwar M.M."/>
            <person name="Wilson P.J."/>
            <person name="Nellist M."/>
            <person name="Short M.P."/>
            <person name="Haines J.L."/>
            <person name="Sampson J.R."/>
            <person name="Ramesh V."/>
        </authorList>
    </citation>
    <scope>NUCLEOTIDE SEQUENCE [GENOMIC DNA]</scope>
    <scope>ALTERNATIVE SPLICING (ISOFORMS 1; 2 AND 3)</scope>
</reference>
<reference key="4">
    <citation type="journal article" date="1996" name="Hum. Mol. Genet.">
        <title>Comparative analysis and genomic structure of the tuberous sclerosis 2 (TSC2) gene in human and pufferfish.</title>
        <authorList>
            <person name="Maheshwar M.M."/>
            <person name="Sandford R."/>
            <person name="Nellist M."/>
            <person name="Cheadle J.P."/>
            <person name="Sgotto B."/>
            <person name="Vaudin M."/>
            <person name="Sampson J.R."/>
        </authorList>
    </citation>
    <scope>NUCLEOTIDE SEQUENCE [GENOMIC DNA]</scope>
    <scope>VARIANTS THR-94; PHE-320; PHE-619 AND ARG-802</scope>
</reference>
<reference key="5">
    <citation type="journal article" date="2014" name="Nat. Commun.">
        <title>Protein interaction network of alternatively spliced isoforms from brain links genetic risk factors for autism.</title>
        <authorList>
            <person name="Corominas R."/>
            <person name="Yang X."/>
            <person name="Lin G.N."/>
            <person name="Kang S."/>
            <person name="Shen Y."/>
            <person name="Ghamsari L."/>
            <person name="Broly M."/>
            <person name="Rodriguez M."/>
            <person name="Tam S."/>
            <person name="Wanamaker S.A."/>
            <person name="Fan C."/>
            <person name="Yi S."/>
            <person name="Tasan M."/>
            <person name="Lemmens I."/>
            <person name="Kuang X."/>
            <person name="Zhao N."/>
            <person name="Malhotra D."/>
            <person name="Michaelson J.J."/>
            <person name="Vacic V."/>
            <person name="Calderwood M.A."/>
            <person name="Roth F.P."/>
            <person name="Tavernier J."/>
            <person name="Horvath S."/>
            <person name="Salehi-Ashtiani K."/>
            <person name="Korkin D."/>
            <person name="Sebat J."/>
            <person name="Hill D.E."/>
            <person name="Hao T."/>
            <person name="Vidal M."/>
            <person name="Iakoucheva L.M."/>
        </authorList>
    </citation>
    <scope>NUCLEOTIDE SEQUENCE [MRNA] (ISOFORM 8)</scope>
    <source>
        <tissue>Brain</tissue>
    </source>
</reference>
<reference key="6">
    <citation type="journal article" date="2004" name="Nat. Genet.">
        <title>Complete sequencing and characterization of 21,243 full-length human cDNAs.</title>
        <authorList>
            <person name="Ota T."/>
            <person name="Suzuki Y."/>
            <person name="Nishikawa T."/>
            <person name="Otsuki T."/>
            <person name="Sugiyama T."/>
            <person name="Irie R."/>
            <person name="Wakamatsu A."/>
            <person name="Hayashi K."/>
            <person name="Sato H."/>
            <person name="Nagai K."/>
            <person name="Kimura K."/>
            <person name="Makita H."/>
            <person name="Sekine M."/>
            <person name="Obayashi M."/>
            <person name="Nishi T."/>
            <person name="Shibahara T."/>
            <person name="Tanaka T."/>
            <person name="Ishii S."/>
            <person name="Yamamoto J."/>
            <person name="Saito K."/>
            <person name="Kawai Y."/>
            <person name="Isono Y."/>
            <person name="Nakamura Y."/>
            <person name="Nagahari K."/>
            <person name="Murakami K."/>
            <person name="Yasuda T."/>
            <person name="Iwayanagi T."/>
            <person name="Wagatsuma M."/>
            <person name="Shiratori A."/>
            <person name="Sudo H."/>
            <person name="Hosoiri T."/>
            <person name="Kaku Y."/>
            <person name="Kodaira H."/>
            <person name="Kondo H."/>
            <person name="Sugawara M."/>
            <person name="Takahashi M."/>
            <person name="Kanda K."/>
            <person name="Yokoi T."/>
            <person name="Furuya T."/>
            <person name="Kikkawa E."/>
            <person name="Omura Y."/>
            <person name="Abe K."/>
            <person name="Kamihara K."/>
            <person name="Katsuta N."/>
            <person name="Sato K."/>
            <person name="Tanikawa M."/>
            <person name="Yamazaki M."/>
            <person name="Ninomiya K."/>
            <person name="Ishibashi T."/>
            <person name="Yamashita H."/>
            <person name="Murakawa K."/>
            <person name="Fujimori K."/>
            <person name="Tanai H."/>
            <person name="Kimata M."/>
            <person name="Watanabe M."/>
            <person name="Hiraoka S."/>
            <person name="Chiba Y."/>
            <person name="Ishida S."/>
            <person name="Ono Y."/>
            <person name="Takiguchi S."/>
            <person name="Watanabe S."/>
            <person name="Yosida M."/>
            <person name="Hotuta T."/>
            <person name="Kusano J."/>
            <person name="Kanehori K."/>
            <person name="Takahashi-Fujii A."/>
            <person name="Hara H."/>
            <person name="Tanase T.-O."/>
            <person name="Nomura Y."/>
            <person name="Togiya S."/>
            <person name="Komai F."/>
            <person name="Hara R."/>
            <person name="Takeuchi K."/>
            <person name="Arita M."/>
            <person name="Imose N."/>
            <person name="Musashino K."/>
            <person name="Yuuki H."/>
            <person name="Oshima A."/>
            <person name="Sasaki N."/>
            <person name="Aotsuka S."/>
            <person name="Yoshikawa Y."/>
            <person name="Matsunawa H."/>
            <person name="Ichihara T."/>
            <person name="Shiohata N."/>
            <person name="Sano S."/>
            <person name="Moriya S."/>
            <person name="Momiyama H."/>
            <person name="Satoh N."/>
            <person name="Takami S."/>
            <person name="Terashima Y."/>
            <person name="Suzuki O."/>
            <person name="Nakagawa S."/>
            <person name="Senoh A."/>
            <person name="Mizoguchi H."/>
            <person name="Goto Y."/>
            <person name="Shimizu F."/>
            <person name="Wakebe H."/>
            <person name="Hishigaki H."/>
            <person name="Watanabe T."/>
            <person name="Sugiyama A."/>
            <person name="Takemoto M."/>
            <person name="Kawakami B."/>
            <person name="Yamazaki M."/>
            <person name="Watanabe K."/>
            <person name="Kumagai A."/>
            <person name="Itakura S."/>
            <person name="Fukuzumi Y."/>
            <person name="Fujimori Y."/>
            <person name="Komiyama M."/>
            <person name="Tashiro H."/>
            <person name="Tanigami A."/>
            <person name="Fujiwara T."/>
            <person name="Ono T."/>
            <person name="Yamada K."/>
            <person name="Fujii Y."/>
            <person name="Ozaki K."/>
            <person name="Hirao M."/>
            <person name="Ohmori Y."/>
            <person name="Kawabata A."/>
            <person name="Hikiji T."/>
            <person name="Kobatake N."/>
            <person name="Inagaki H."/>
            <person name="Ikema Y."/>
            <person name="Okamoto S."/>
            <person name="Okitani R."/>
            <person name="Kawakami T."/>
            <person name="Noguchi S."/>
            <person name="Itoh T."/>
            <person name="Shigeta K."/>
            <person name="Senba T."/>
            <person name="Matsumura K."/>
            <person name="Nakajima Y."/>
            <person name="Mizuno T."/>
            <person name="Morinaga M."/>
            <person name="Sasaki M."/>
            <person name="Togashi T."/>
            <person name="Oyama M."/>
            <person name="Hata H."/>
            <person name="Watanabe M."/>
            <person name="Komatsu T."/>
            <person name="Mizushima-Sugano J."/>
            <person name="Satoh T."/>
            <person name="Shirai Y."/>
            <person name="Takahashi Y."/>
            <person name="Nakagawa K."/>
            <person name="Okumura K."/>
            <person name="Nagase T."/>
            <person name="Nomura N."/>
            <person name="Kikuchi H."/>
            <person name="Masuho Y."/>
            <person name="Yamashita R."/>
            <person name="Nakai K."/>
            <person name="Yada T."/>
            <person name="Nakamura Y."/>
            <person name="Ohara O."/>
            <person name="Isogai T."/>
            <person name="Sugano S."/>
        </authorList>
    </citation>
    <scope>NUCLEOTIDE SEQUENCE [LARGE SCALE MRNA] (ISOFORMS 5; 6; 7 AND 8)</scope>
    <source>
        <tissue>Amygdala</tissue>
        <tissue>Hippocampus</tissue>
    </source>
</reference>
<reference key="7">
    <citation type="submission" date="2005-03" db="EMBL/GenBank/DDBJ databases">
        <authorList>
            <person name="Nakajima D."/>
            <person name="Saito K."/>
            <person name="Yamakawa H."/>
            <person name="Kikuno R.F."/>
            <person name="Nakayama M."/>
            <person name="Ohara R."/>
            <person name="Okazaki N."/>
            <person name="Koga H."/>
            <person name="Nagase T."/>
            <person name="Ohara O."/>
        </authorList>
    </citation>
    <scope>NUCLEOTIDE SEQUENCE [LARGE SCALE MRNA] (ISOFORM 5)</scope>
    <source>
        <tissue>Aortic endothelium</tissue>
    </source>
</reference>
<reference key="8">
    <citation type="journal article" date="2004" name="Nature">
        <title>The sequence and analysis of duplication-rich human chromosome 16.</title>
        <authorList>
            <person name="Martin J."/>
            <person name="Han C."/>
            <person name="Gordon L.A."/>
            <person name="Terry A."/>
            <person name="Prabhakar S."/>
            <person name="She X."/>
            <person name="Xie G."/>
            <person name="Hellsten U."/>
            <person name="Chan Y.M."/>
            <person name="Altherr M."/>
            <person name="Couronne O."/>
            <person name="Aerts A."/>
            <person name="Bajorek E."/>
            <person name="Black S."/>
            <person name="Blumer H."/>
            <person name="Branscomb E."/>
            <person name="Brown N.C."/>
            <person name="Bruno W.J."/>
            <person name="Buckingham J.M."/>
            <person name="Callen D.F."/>
            <person name="Campbell C.S."/>
            <person name="Campbell M.L."/>
            <person name="Campbell E.W."/>
            <person name="Caoile C."/>
            <person name="Challacombe J.F."/>
            <person name="Chasteen L.A."/>
            <person name="Chertkov O."/>
            <person name="Chi H.C."/>
            <person name="Christensen M."/>
            <person name="Clark L.M."/>
            <person name="Cohn J.D."/>
            <person name="Denys M."/>
            <person name="Detter J.C."/>
            <person name="Dickson M."/>
            <person name="Dimitrijevic-Bussod M."/>
            <person name="Escobar J."/>
            <person name="Fawcett J.J."/>
            <person name="Flowers D."/>
            <person name="Fotopulos D."/>
            <person name="Glavina T."/>
            <person name="Gomez M."/>
            <person name="Gonzales E."/>
            <person name="Goodstein D."/>
            <person name="Goodwin L.A."/>
            <person name="Grady D.L."/>
            <person name="Grigoriev I."/>
            <person name="Groza M."/>
            <person name="Hammon N."/>
            <person name="Hawkins T."/>
            <person name="Haydu L."/>
            <person name="Hildebrand C.E."/>
            <person name="Huang W."/>
            <person name="Israni S."/>
            <person name="Jett J."/>
            <person name="Jewett P.B."/>
            <person name="Kadner K."/>
            <person name="Kimball H."/>
            <person name="Kobayashi A."/>
            <person name="Krawczyk M.-C."/>
            <person name="Leyba T."/>
            <person name="Longmire J.L."/>
            <person name="Lopez F."/>
            <person name="Lou Y."/>
            <person name="Lowry S."/>
            <person name="Ludeman T."/>
            <person name="Manohar C.F."/>
            <person name="Mark G.A."/>
            <person name="McMurray K.L."/>
            <person name="Meincke L.J."/>
            <person name="Morgan J."/>
            <person name="Moyzis R.K."/>
            <person name="Mundt M.O."/>
            <person name="Munk A.C."/>
            <person name="Nandkeshwar R.D."/>
            <person name="Pitluck S."/>
            <person name="Pollard M."/>
            <person name="Predki P."/>
            <person name="Parson-Quintana B."/>
            <person name="Ramirez L."/>
            <person name="Rash S."/>
            <person name="Retterer J."/>
            <person name="Ricke D.O."/>
            <person name="Robinson D.L."/>
            <person name="Rodriguez A."/>
            <person name="Salamov A."/>
            <person name="Saunders E.H."/>
            <person name="Scott D."/>
            <person name="Shough T."/>
            <person name="Stallings R.L."/>
            <person name="Stalvey M."/>
            <person name="Sutherland R.D."/>
            <person name="Tapia R."/>
            <person name="Tesmer J.G."/>
            <person name="Thayer N."/>
            <person name="Thompson L.S."/>
            <person name="Tice H."/>
            <person name="Torney D.C."/>
            <person name="Tran-Gyamfi M."/>
            <person name="Tsai M."/>
            <person name="Ulanovsky L.E."/>
            <person name="Ustaszewska A."/>
            <person name="Vo N."/>
            <person name="White P.S."/>
            <person name="Williams A.L."/>
            <person name="Wills P.L."/>
            <person name="Wu J.-R."/>
            <person name="Wu K."/>
            <person name="Yang J."/>
            <person name="DeJong P."/>
            <person name="Bruce D."/>
            <person name="Doggett N.A."/>
            <person name="Deaven L."/>
            <person name="Schmutz J."/>
            <person name="Grimwood J."/>
            <person name="Richardson P."/>
            <person name="Rokhsar D.S."/>
            <person name="Eichler E.E."/>
            <person name="Gilna P."/>
            <person name="Lucas S.M."/>
            <person name="Myers R.M."/>
            <person name="Rubin E.M."/>
            <person name="Pennacchio L.A."/>
        </authorList>
    </citation>
    <scope>NUCLEOTIDE SEQUENCE [LARGE SCALE GENOMIC DNA]</scope>
</reference>
<reference key="9">
    <citation type="submission" date="2005-09" db="EMBL/GenBank/DDBJ databases">
        <authorList>
            <person name="Mural R.J."/>
            <person name="Istrail S."/>
            <person name="Sutton G.G."/>
            <person name="Florea L."/>
            <person name="Halpern A.L."/>
            <person name="Mobarry C.M."/>
            <person name="Lippert R."/>
            <person name="Walenz B."/>
            <person name="Shatkay H."/>
            <person name="Dew I."/>
            <person name="Miller J.R."/>
            <person name="Flanigan M.J."/>
            <person name="Edwards N.J."/>
            <person name="Bolanos R."/>
            <person name="Fasulo D."/>
            <person name="Halldorsson B.V."/>
            <person name="Hannenhalli S."/>
            <person name="Turner R."/>
            <person name="Yooseph S."/>
            <person name="Lu F."/>
            <person name="Nusskern D.R."/>
            <person name="Shue B.C."/>
            <person name="Zheng X.H."/>
            <person name="Zhong F."/>
            <person name="Delcher A.L."/>
            <person name="Huson D.H."/>
            <person name="Kravitz S.A."/>
            <person name="Mouchard L."/>
            <person name="Reinert K."/>
            <person name="Remington K.A."/>
            <person name="Clark A.G."/>
            <person name="Waterman M.S."/>
            <person name="Eichler E.E."/>
            <person name="Adams M.D."/>
            <person name="Hunkapiller M.W."/>
            <person name="Myers E.W."/>
            <person name="Venter J.C."/>
        </authorList>
    </citation>
    <scope>NUCLEOTIDE SEQUENCE [LARGE SCALE GENOMIC DNA]</scope>
</reference>
<reference key="10">
    <citation type="journal article" date="2004" name="Genome Res.">
        <title>The status, quality, and expansion of the NIH full-length cDNA project: the Mammalian Gene Collection (MGC).</title>
        <authorList>
            <consortium name="The MGC Project Team"/>
        </authorList>
    </citation>
    <scope>NUCLEOTIDE SEQUENCE [LARGE SCALE MRNA] (ISOFORM 4)</scope>
    <source>
        <tissue>Lymph</tissue>
    </source>
</reference>
<reference key="11">
    <citation type="journal article" date="1998" name="Gene">
        <title>Genomic structure and sequence of a human homologue (NTHL1/NTH1) of Escherichia coli endonuclease III with those of the adjacent parts of TSC2 and SLC9A3R2 genes.</title>
        <authorList>
            <person name="Imai K."/>
            <person name="Sarker A.H."/>
            <person name="Akiyama K."/>
            <person name="Ikeda S."/>
            <person name="Yao M."/>
            <person name="Tsutsui K."/>
            <person name="Shohmori T."/>
            <person name="Seki S."/>
        </authorList>
    </citation>
    <scope>NUCLEOTIDE SEQUENCE [GENOMIC DNA] OF 1-199</scope>
    <source>
        <tissue>Placenta</tissue>
    </source>
</reference>
<reference key="12">
    <citation type="journal article" date="1997" name="J. Biol. Chem.">
        <title>The tuberous sclerosis 2 gene product, tuberin, functions as a Rab5 GTPase activating protein (GAP) in modulating endocytosis.</title>
        <authorList>
            <person name="Xiao G.-H."/>
            <person name="Shoarinejad F."/>
            <person name="Jin F."/>
            <person name="Golemis E.A."/>
            <person name="Yeung R.S."/>
        </authorList>
    </citation>
    <scope>INTERACTION WITH RABEP1</scope>
</reference>
<reference key="13">
    <citation type="journal article" date="1998" name="Hum. Mol. Genet.">
        <title>Interaction between hamartin and tuberin, the TSC1 and TSC2 gene products.</title>
        <authorList>
            <person name="van Slegtenhorst M.A."/>
            <person name="Nellist M."/>
            <person name="Nagelkerken B."/>
            <person name="Cheadle J.P."/>
            <person name="Snell R.G."/>
            <person name="van den Ouweland A.M.W."/>
            <person name="Reuser A."/>
            <person name="Sampson J.R."/>
            <person name="Halley D.J.J."/>
            <person name="van der Sluijs P."/>
        </authorList>
    </citation>
    <scope>INTERACTION WITH TSC1</scope>
</reference>
<reference key="14">
    <citation type="journal article" date="1999" name="J. Biol. Chem.">
        <title>Characterization of the cytosolic tuberin-hamartin complex. Tuberin is a cytosolic chaperone for hamartin.</title>
        <authorList>
            <person name="Nellist M."/>
            <person name="van Slegtenhorst M.A."/>
            <person name="Goedbloed M."/>
            <person name="van den Ouweland A.M.W."/>
            <person name="Halley D.J.J."/>
            <person name="van der Sluijs P."/>
        </authorList>
    </citation>
    <scope>SUBCELLULAR LOCATION</scope>
    <scope>INTERACTION WITH TSC1</scope>
</reference>
<reference key="15">
    <citation type="journal article" date="2002" name="J. Hum. Genet.">
        <title>Mutation analysis of the TSC1 and TSC2 genes in Japanese patients with pulmonary lymphangioleiomyomatosis.</title>
        <authorList>
            <person name="Sato T."/>
            <person name="Seyama K."/>
            <person name="Fujii H."/>
            <person name="Maruyama H."/>
            <person name="Setoguchi Y."/>
            <person name="Iwakami S."/>
            <person name="Fukuchi Y."/>
            <person name="Hino O."/>
        </authorList>
    </citation>
    <scope>INVOLVEMENT IN LAM</scope>
</reference>
<reference key="16">
    <citation type="journal article" date="2002" name="Mol. Cell">
        <title>Identification of the tuberous sclerosis complex-2 tumor suppressor gene product tuberin as a target of the phosphoinositide 3-kinase/akt pathway.</title>
        <authorList>
            <person name="Manning B.D."/>
            <person name="Tee A.R."/>
            <person name="Logsdon M.N."/>
            <person name="Blenis J."/>
            <person name="Cantley L.C."/>
        </authorList>
    </citation>
    <scope>PHOSPHORYLATION AT SER-939 AND THR-1462</scope>
    <scope>MUTAGENESIS OF SER-939 AND THR-1462</scope>
</reference>
<reference key="17">
    <citation type="journal article" date="2002" name="Nat. Cell Biol.">
        <title>TSC2 is phosphorylated and inhibited by Akt and suppresses mTOR signalling.</title>
        <authorList>
            <person name="Inoki K."/>
            <person name="Li Y."/>
            <person name="Zhu T."/>
            <person name="Wu J."/>
            <person name="Guan K.L."/>
        </authorList>
    </citation>
    <scope>FUNCTION</scope>
    <scope>INTERACTION WITH TSC1</scope>
    <scope>PHOSPHORYLATION</scope>
</reference>
<reference key="18">
    <citation type="journal article" date="2002" name="Proc. Natl. Acad. Sci. U.S.A.">
        <title>Tuberous sclerosis complex-1 and -2 gene products function together to inhibit mammalian target of rapamycin (mTOR)-mediated downstream signaling.</title>
        <authorList>
            <person name="Tee A.R."/>
            <person name="Fingar D.C."/>
            <person name="Manning B.D."/>
            <person name="Kwiatkowski D.J."/>
            <person name="Cantley L.C."/>
            <person name="Blenis J."/>
        </authorList>
    </citation>
    <scope>FUNCTION</scope>
    <scope>CHARACTERIZATION OF VARIANTS TSC2 MET-599 AND SER-1651</scope>
</reference>
<reference key="19">
    <citation type="journal article" date="2003" name="Cell">
        <title>TSC2 mediates cellular energy response to control cell growth and survival.</title>
        <authorList>
            <person name="Inoki K."/>
            <person name="Zhu T."/>
            <person name="Guan K.L."/>
        </authorList>
    </citation>
    <scope>PHOSPHORYLATION AT THR-1271 AND SER-1387</scope>
    <scope>MUTAGENESIS OF THR-1271 AND SER-1387</scope>
</reference>
<reference key="20">
    <citation type="journal article" date="2003" name="Curr. Biol.">
        <title>Tuberous sclerosis complex gene products, Tuberin and Hamartin, control mTOR signaling by acting as a GTPase-activating protein complex toward Rheb.</title>
        <authorList>
            <person name="Tee A.R."/>
            <person name="Manning B.D."/>
            <person name="Roux P.P."/>
            <person name="Cantley L.C."/>
            <person name="Blenis J."/>
        </authorList>
    </citation>
    <scope>FUNCTION</scope>
    <scope>INTERACTION WITH TSC1</scope>
</reference>
<reference key="21">
    <citation type="journal article" date="2003" name="J. Biol. Chem.">
        <title>Rheb binds tuberous sclerosis complex 2 (TSC2) and promotes S6 kinase activation in a rapamycin- and farnesylation-dependent manner.</title>
        <authorList>
            <person name="Castro A.F."/>
            <person name="Rebhun J.F."/>
            <person name="Clark G.J."/>
            <person name="Quilliam L.A."/>
        </authorList>
    </citation>
    <scope>FUNCTION</scope>
    <scope>INTERACTION WITH TSC1</scope>
</reference>
<reference key="22">
    <citation type="journal article" date="2003" name="Mol. Cell">
        <title>Insulin activation of Rheb, a mediator of mTOR/S6K/4E-BP signaling, is inhibited by TSC1 and 2.</title>
        <authorList>
            <person name="Garami A."/>
            <person name="Zwartkruis F.J."/>
            <person name="Nobukuni T."/>
            <person name="Joaquin M."/>
            <person name="Roccio M."/>
            <person name="Stocker H."/>
            <person name="Kozma S.C."/>
            <person name="Hafen E."/>
            <person name="Bos J.L."/>
            <person name="Thomas G."/>
        </authorList>
    </citation>
    <scope>FUNCTION</scope>
    <scope>CHARACTERIZATION OF VARIANT TSC2 LYS-1643</scope>
</reference>
<reference key="23">
    <citation type="journal article" date="2004" name="Mol. Cell. Biol.">
        <title>Biochemical and functional characterizations of small GTPase Rheb and TSC2 GAP activity.</title>
        <authorList>
            <person name="Li Y."/>
            <person name="Inoki K."/>
            <person name="Guan K.-L."/>
        </authorList>
    </citation>
    <scope>FUNCTION</scope>
    <scope>MUTAGENESIS OF 1637-LYS--ARG-1639; ARG-1745 AND 1749-ARG--ARG-1751</scope>
    <scope>CHARACTERIZATION OF VARIANTS TSC2 LYS-1643; SER-1651; LYS-1681 AND PRO-1743</scope>
</reference>
<reference key="24">
    <citation type="journal article" date="2004" name="Proc. Natl. Acad. Sci. U.S.A.">
        <title>Tumor-promoting phorbol esters and activated Ras inactivate the tuberous sclerosis tumor suppressor complex via p90 ribosomal S6 kinase.</title>
        <authorList>
            <person name="Roux P.P."/>
            <person name="Ballif B.A."/>
            <person name="Anjum R."/>
            <person name="Gygi S.P."/>
            <person name="Blenis J."/>
        </authorList>
    </citation>
    <scope>PHOSPHORYLATION AT SER-1798</scope>
</reference>
<reference key="25">
    <citation type="journal article" date="2005" name="Biochem. Biophys. Res. Commun.">
        <title>Phosphorylation and binding partner analysis of the TSC1-TSC2 complex.</title>
        <authorList>
            <person name="Nellist M."/>
            <person name="Burgers P.C."/>
            <person name="van den Ouweland A.M.W."/>
            <person name="Halley D.J.J."/>
            <person name="Luider T.M."/>
        </authorList>
    </citation>
    <scope>PHOSPHORYLATION AT SER-1387; SER-1418 AND SER-1420</scope>
    <scope>IDENTIFICATION BY MASS SPECTROMETRY</scope>
    <scope>INTERACTION WITH HSPA1; HSPA8 AND TSC1</scope>
    <scope>CHARACTERIZATION OF VARIANTS TSC2 TRP-611 AND GLN-611</scope>
</reference>
<reference key="26">
    <citation type="journal article" date="2006" name="J. Biol. Chem.">
        <title>TSC1 stabilizes TSC2 by inhibiting the interaction between TSC2 and the HERC1 ubiquitin ligase.</title>
        <authorList>
            <person name="Chong-Kopera H."/>
            <person name="Inoki K."/>
            <person name="Li Y."/>
            <person name="Zhu T."/>
            <person name="Garcia-Gonzalo F.R."/>
            <person name="Rosa J.L."/>
            <person name="Guan K.-L."/>
        </authorList>
    </citation>
    <scope>INTERACTION WITH HERC1 AND TSC1</scope>
</reference>
<reference key="27">
    <citation type="journal article" date="2008" name="Cell Host Microbe">
        <title>Human cytomegalovirus protein UL38 inhibits host cell stress responses by antagonizing the tuberous sclerosis protein complex.</title>
        <authorList>
            <person name="Moorman N.J."/>
            <person name="Cristea I.M."/>
            <person name="Terhune S.S."/>
            <person name="Rout M.P."/>
            <person name="Chait B.T."/>
            <person name="Shenk T."/>
        </authorList>
    </citation>
    <scope>INTERACTION WITH HUMAN CYTOMEGALOVIRUS PROTEIN UL38</scope>
</reference>
<reference key="28">
    <citation type="journal article" date="2008" name="Cell. Signal.">
        <title>Pam (Protein associated with Myc) functions as an E3 ubiquitin ligase and regulates TSC/mTOR signaling.</title>
        <authorList>
            <person name="Han S."/>
            <person name="Witt R.M."/>
            <person name="Santos T.M."/>
            <person name="Polizzano C."/>
            <person name="Sabatini B.L."/>
            <person name="Ramesh V."/>
        </authorList>
    </citation>
    <scope>UBIQUITINATION BY MYCBP2</scope>
    <scope>PHOSPHORYLATION AT SER-540; SER-664; SER-939; THR-1462 AND SER-1798</scope>
    <scope>CHARACTERIZATION OF VARIANT GLN-611</scope>
</reference>
<reference key="29">
    <citation type="journal article" date="2008" name="Genes Dev.">
        <title>WD40 protein FBW5 promotes ubiquitination of tumor suppressor TSC2 by DDB1-CUL4-ROC1 ligase.</title>
        <authorList>
            <person name="Hu J."/>
            <person name="Zacharek S."/>
            <person name="He Y.J."/>
            <person name="Lee H."/>
            <person name="Shumway S."/>
            <person name="Duronio R.J."/>
            <person name="Xiong Y."/>
        </authorList>
    </citation>
    <scope>UBIQUITINATION</scope>
</reference>
<reference key="30">
    <citation type="journal article" date="2008" name="J. Proteome Res.">
        <title>Combining protein-based IMAC, peptide-based IMAC, and MudPIT for efficient phosphoproteomic analysis.</title>
        <authorList>
            <person name="Cantin G.T."/>
            <person name="Yi W."/>
            <person name="Lu B."/>
            <person name="Park S.K."/>
            <person name="Xu T."/>
            <person name="Lee J.-D."/>
            <person name="Yates J.R. III"/>
        </authorList>
    </citation>
    <scope>IDENTIFICATION BY MASS SPECTROMETRY [LARGE SCALE ANALYSIS]</scope>
    <source>
        <tissue>Cervix carcinoma</tissue>
    </source>
</reference>
<reference key="31">
    <citation type="journal article" date="2008" name="Mol. Cell">
        <title>Kinase-selective enrichment enables quantitative phosphoproteomics of the kinome across the cell cycle.</title>
        <authorList>
            <person name="Daub H."/>
            <person name="Olsen J.V."/>
            <person name="Bairlein M."/>
            <person name="Gnad F."/>
            <person name="Oppermann F.S."/>
            <person name="Korner R."/>
            <person name="Greff Z."/>
            <person name="Keri G."/>
            <person name="Stemmann O."/>
            <person name="Mann M."/>
        </authorList>
    </citation>
    <scope>IDENTIFICATION BY MASS SPECTROMETRY [LARGE SCALE ANALYSIS]</scope>
    <source>
        <tissue>Cervix carcinoma</tissue>
    </source>
</reference>
<reference key="32">
    <citation type="journal article" date="2008" name="Proc. Natl. Acad. Sci. U.S.A.">
        <title>A quantitative atlas of mitotic phosphorylation.</title>
        <authorList>
            <person name="Dephoure N."/>
            <person name="Zhou C."/>
            <person name="Villen J."/>
            <person name="Beausoleil S.A."/>
            <person name="Bakalarski C.E."/>
            <person name="Elledge S.J."/>
            <person name="Gygi S.P."/>
        </authorList>
    </citation>
    <scope>PHOSPHORYLATION [LARGE SCALE ANALYSIS] AT THR-927; SER-981; SER-1132; SER-1155; SER-1337; SER-1338; SER-1387; SER-1411; SER-1420 AND SER-1452</scope>
    <scope>IDENTIFICATION BY MASS SPECTROMETRY [LARGE SCALE ANALYSIS]</scope>
    <source>
        <tissue>Cervix carcinoma</tissue>
    </source>
</reference>
<reference key="33">
    <citation type="journal article" date="2009" name="Anal. Chem.">
        <title>Lys-N and trypsin cover complementary parts of the phosphoproteome in a refined SCX-based approach.</title>
        <authorList>
            <person name="Gauci S."/>
            <person name="Helbig A.O."/>
            <person name="Slijper M."/>
            <person name="Krijgsveld J."/>
            <person name="Heck A.J."/>
            <person name="Mohammed S."/>
        </authorList>
    </citation>
    <scope>IDENTIFICATION BY MASS SPECTROMETRY [LARGE SCALE ANALYSIS]</scope>
</reference>
<reference key="34">
    <citation type="journal article" date="2009" name="J. Biol. Chem.">
        <title>Peptide combinatorial libraries identify TSC2 as a death-associated protein kinase (DAPK) death domain-binding protein and reveal a stimulatory role for DAPK in mTORC1 signaling.</title>
        <authorList>
            <person name="Stevens C."/>
            <person name="Lin Y."/>
            <person name="Harrison B."/>
            <person name="Burch L."/>
            <person name="Ridgway R.A."/>
            <person name="Sansom O."/>
            <person name="Hupp T."/>
        </authorList>
    </citation>
    <scope>PHOSPHORYLATION BY DAPK1</scope>
</reference>
<reference key="35">
    <citation type="journal article" date="2009" name="Sci. Signal.">
        <title>Quantitative phosphoproteomic analysis of T cell receptor signaling reveals system-wide modulation of protein-protein interactions.</title>
        <authorList>
            <person name="Mayya V."/>
            <person name="Lundgren D.H."/>
            <person name="Hwang S.-I."/>
            <person name="Rezaul K."/>
            <person name="Wu L."/>
            <person name="Eng J.K."/>
            <person name="Rodionov V."/>
            <person name="Han D.K."/>
        </authorList>
    </citation>
    <scope>PHOSPHORYLATION [LARGE SCALE ANALYSIS] AT SER-1155; THR-1462 AND SER-1798</scope>
    <scope>IDENTIFICATION BY MASS SPECTROMETRY [LARGE SCALE ANALYSIS]</scope>
    <source>
        <tissue>Leukemic T-cell</tissue>
    </source>
</reference>
<reference key="36">
    <citation type="journal article" date="2010" name="Sci. Signal.">
        <title>Quantitative phosphoproteomics reveals widespread full phosphorylation site occupancy during mitosis.</title>
        <authorList>
            <person name="Olsen J.V."/>
            <person name="Vermeulen M."/>
            <person name="Santamaria A."/>
            <person name="Kumar C."/>
            <person name="Miller M.L."/>
            <person name="Jensen L.J."/>
            <person name="Gnad F."/>
            <person name="Cox J."/>
            <person name="Jensen T.S."/>
            <person name="Nigg E.A."/>
            <person name="Brunak S."/>
            <person name="Mann M."/>
        </authorList>
    </citation>
    <scope>PHOSPHORYLATION [LARGE SCALE ANALYSIS] AT SER-1346 AND SER-1798</scope>
    <scope>IDENTIFICATION BY MASS SPECTROMETRY [LARGE SCALE ANALYSIS]</scope>
    <source>
        <tissue>Cervix carcinoma</tissue>
    </source>
</reference>
<reference key="37">
    <citation type="journal article" date="2010" name="Sci. Signal.">
        <title>ARD1 stabilization of TSC2 suppresses tumorigenesis through the mTOR signaling pathway.</title>
        <authorList>
            <person name="Kuo H.P."/>
            <person name="Lee D.F."/>
            <person name="Chen C.T."/>
            <person name="Liu M."/>
            <person name="Chou C.K."/>
            <person name="Lee H.J."/>
            <person name="Du Y."/>
            <person name="Xie X."/>
            <person name="Wei Y."/>
            <person name="Xia W."/>
            <person name="Weihua Z."/>
            <person name="Yang J.Y."/>
            <person name="Yen C.J."/>
            <person name="Huang T.H."/>
            <person name="Tan M."/>
            <person name="Xing G."/>
            <person name="Zhao Y."/>
            <person name="Lin C.H."/>
            <person name="Tsai S.F."/>
            <person name="Fidler I.J."/>
            <person name="Hung M.C."/>
        </authorList>
    </citation>
    <scope>INTERACTION WITH NAA10</scope>
</reference>
<reference key="38">
    <citation type="journal article" date="2011" name="BMC Syst. Biol.">
        <title>Initial characterization of the human central proteome.</title>
        <authorList>
            <person name="Burkard T.R."/>
            <person name="Planyavsky M."/>
            <person name="Kaupe I."/>
            <person name="Breitwieser F.P."/>
            <person name="Buerckstuemmer T."/>
            <person name="Bennett K.L."/>
            <person name="Superti-Furga G."/>
            <person name="Colinge J."/>
        </authorList>
    </citation>
    <scope>IDENTIFICATION BY MASS SPECTROMETRY [LARGE SCALE ANALYSIS]</scope>
</reference>
<reference key="39">
    <citation type="journal article" date="2011" name="Sci. Signal.">
        <title>System-wide temporal characterization of the proteome and phosphoproteome of human embryonic stem cell differentiation.</title>
        <authorList>
            <person name="Rigbolt K.T."/>
            <person name="Prokhorova T.A."/>
            <person name="Akimov V."/>
            <person name="Henningsen J."/>
            <person name="Johansen P.T."/>
            <person name="Kratchmarova I."/>
            <person name="Kassem M."/>
            <person name="Mann M."/>
            <person name="Olsen J.V."/>
            <person name="Blagoev B."/>
        </authorList>
    </citation>
    <scope>PHOSPHORYLATION [LARGE SCALE ANALYSIS] AT SER-1132</scope>
    <scope>IDENTIFICATION BY MASS SPECTROMETRY [LARGE SCALE ANALYSIS]</scope>
</reference>
<reference key="40">
    <citation type="journal article" date="2012" name="Mol. Cell">
        <title>TBC1D7 is a third subunit of the TSC1-TSC2 complex upstream of mTORC1.</title>
        <authorList>
            <person name="Dibble C.C."/>
            <person name="Elis W."/>
            <person name="Menon S."/>
            <person name="Qin W."/>
            <person name="Klekota J."/>
            <person name="Asara J.M."/>
            <person name="Finan P.M."/>
            <person name="Kwiatkowski D.J."/>
            <person name="Murphy L.O."/>
            <person name="Manning B.D."/>
        </authorList>
    </citation>
    <scope>IDENTIFICATION IN THE TSC-TBC COMPLEX</scope>
</reference>
<reference key="41">
    <citation type="journal article" date="2012" name="Structure">
        <title>An autoinhibited noncanonical mechanism of GTP hydrolysis by Rheb maintains mTORC1 homeostasis.</title>
        <authorList>
            <person name="Mazhab-Jafari M.T."/>
            <person name="Marshall C.B."/>
            <person name="Ishiyama N."/>
            <person name="Ho J."/>
            <person name="Di Palma V."/>
            <person name="Stambolic V."/>
            <person name="Ikura M."/>
        </authorList>
    </citation>
    <scope>FUNCTION</scope>
</reference>
<reference key="42">
    <citation type="journal article" date="2013" name="J. Proteome Res.">
        <title>Toward a comprehensive characterization of a human cancer cell phosphoproteome.</title>
        <authorList>
            <person name="Zhou H."/>
            <person name="Di Palma S."/>
            <person name="Preisinger C."/>
            <person name="Peng M."/>
            <person name="Polat A.N."/>
            <person name="Heck A.J."/>
            <person name="Mohammed S."/>
        </authorList>
    </citation>
    <scope>PHOSPHORYLATION [LARGE SCALE ANALYSIS] AT SER-981; SER-1346; SER-1364; SER-1411; SER-1420; SER-1452 AND SER-1799</scope>
    <scope>IDENTIFICATION BY MASS SPECTROMETRY [LARGE SCALE ANALYSIS]</scope>
    <source>
        <tissue>Cervix carcinoma</tissue>
        <tissue>Erythroleukemia</tissue>
    </source>
</reference>
<reference key="43">
    <citation type="journal article" date="2014" name="Cell">
        <title>Spatial control of the TSC complex integrates insulin and nutrient regulation of mTORC1 at the lysosome.</title>
        <authorList>
            <person name="Menon S."/>
            <person name="Dibble C.C."/>
            <person name="Talbott G."/>
            <person name="Hoxhaj G."/>
            <person name="Valvezan A.J."/>
            <person name="Takahashi H."/>
            <person name="Cantley L.C."/>
            <person name="Manning B.D."/>
        </authorList>
    </citation>
    <scope>FUNCTION</scope>
    <scope>IDENTIFICATION IN THE TSC-TBC COMPLEX</scope>
    <scope>SUBCELLULAR LOCATION</scope>
    <scope>PHOSPHORYLATION AT SER-939 AND THR-1462</scope>
</reference>
<reference key="44">
    <citation type="journal article" date="2014" name="J. Proteomics">
        <title>An enzyme assisted RP-RPLC approach for in-depth analysis of human liver phosphoproteome.</title>
        <authorList>
            <person name="Bian Y."/>
            <person name="Song C."/>
            <person name="Cheng K."/>
            <person name="Dong M."/>
            <person name="Wang F."/>
            <person name="Huang J."/>
            <person name="Sun D."/>
            <person name="Wang L."/>
            <person name="Ye M."/>
            <person name="Zou H."/>
        </authorList>
    </citation>
    <scope>PHOSPHORYLATION [LARGE SCALE ANALYSIS] AT SER-1411</scope>
    <scope>IDENTIFICATION BY MASS SPECTROMETRY [LARGE SCALE ANALYSIS]</scope>
    <source>
        <tissue>Liver</tissue>
    </source>
</reference>
<reference key="45">
    <citation type="journal article" date="2015" name="Dev. Cell">
        <title>MCRS1 binds and couples Rheb to amino acid-dependent mTORC1 activation.</title>
        <authorList>
            <person name="Fawal M.A."/>
            <person name="Brandt M."/>
            <person name="Djouder N."/>
        </authorList>
    </citation>
    <scope>INTERACTION WITH RHEB</scope>
    <scope>SUBCELLULAR LOCATION</scope>
</reference>
<reference key="46">
    <citation type="journal article" date="2015" name="Mol. Cell">
        <title>The ubiquitination of RagA GTPase by RNF152 negatively regulates mTORC1 activation.</title>
        <authorList>
            <person name="Deng L."/>
            <person name="Jiang C."/>
            <person name="Chen L."/>
            <person name="Jin J."/>
            <person name="Wei J."/>
            <person name="Zhao L."/>
            <person name="Chen M."/>
            <person name="Pan W."/>
            <person name="Xu Y."/>
            <person name="Chu H."/>
            <person name="Wang X."/>
            <person name="Ge X."/>
            <person name="Li D."/>
            <person name="Liao L."/>
            <person name="Liu M."/>
            <person name="Li L."/>
            <person name="Wang P."/>
        </authorList>
    </citation>
    <scope>INTERACTION WITH RRAGA</scope>
</reference>
<reference key="47">
    <citation type="journal article" date="2016" name="Nat. Commun.">
        <title>The Parkinson's disease-associated genes ATP13A2 and SYT11 regulate autophagy via a common pathway.</title>
        <authorList>
            <person name="Bento C.F."/>
            <person name="Ashkenazi A."/>
            <person name="Jimenez-Sanchez M."/>
            <person name="Rubinsztein D.C."/>
        </authorList>
    </citation>
    <scope>UBIQUITINATION</scope>
</reference>
<reference key="48">
    <citation type="journal article" date="2017" name="Am. J. Hum. Genet.">
        <title>Somatic mutations in TSC1 and TSC2 cause focal cortical dysplasia.</title>
        <authorList>
            <person name="Lim J.S."/>
            <person name="Gopalappa R."/>
            <person name="Kim S.H."/>
            <person name="Ramakrishna S."/>
            <person name="Lee M."/>
            <person name="Kim W.I."/>
            <person name="Kim J."/>
            <person name="Park S.M."/>
            <person name="Lee J."/>
            <person name="Oh J.H."/>
            <person name="Kim H.D."/>
            <person name="Park C.H."/>
            <person name="Lee J.S."/>
            <person name="Kim S."/>
            <person name="Kim D.S."/>
            <person name="Han J.M."/>
            <person name="Kang H.C."/>
            <person name="Kim H.H."/>
            <person name="Lee J.H."/>
        </authorList>
    </citation>
    <scope>FUNCTION</scope>
    <scope>INTERACTION WITH TSC1</scope>
    <scope>INVOLVEMENT IN FCORD2</scope>
    <scope>VARIANT FCORD2 ILE-1547</scope>
    <scope>CHARACTERIZATION OF VARIANT FCORD2 ILE-1547</scope>
</reference>
<reference key="49">
    <citation type="journal article" date="2017" name="EMBO J.">
        <title>Tumor suppressor Tsc1 is a new Hsp90 co-chaperone that facilitates folding of kinase and non-kinase clients.</title>
        <authorList>
            <person name="Woodford M.R."/>
            <person name="Sager R.A."/>
            <person name="Marris E."/>
            <person name="Dunn D.M."/>
            <person name="Blanden A.R."/>
            <person name="Murphy R.L."/>
            <person name="Rensing N."/>
            <person name="Shapiro O."/>
            <person name="Panaretou B."/>
            <person name="Prodromou C."/>
            <person name="Loh S.N."/>
            <person name="Gutmann D.H."/>
            <person name="Bourboulia D."/>
            <person name="Bratslavsky G."/>
            <person name="Wong M."/>
            <person name="Mollapour M."/>
        </authorList>
    </citation>
    <scope>IDENTIFICATION IN A COMPLEX WITH HSP90; HSP70; STIP1; CDC37; PPP5C; PTGES3; TSC1; AKT; CDK4; RAF1 AND NR3C1</scope>
    <scope>INTERACTION WITH HSP90AA1 AND TSC1</scope>
</reference>
<reference key="50">
    <citation type="journal article" date="2017" name="Nat. Commun.">
        <title>R2TP/Prefoldin-like component RUVBL1/RUVBL2 directly interacts with ZNHIT2 to regulate assembly of U5 small nuclear ribonucleoprotein.</title>
        <authorList>
            <person name="Cloutier P."/>
            <person name="Poitras C."/>
            <person name="Durand M."/>
            <person name="Hekmat O."/>
            <person name="Fiola-Masson E."/>
            <person name="Bouchard A."/>
            <person name="Faubert D."/>
            <person name="Chabot B."/>
            <person name="Coulombe B."/>
        </authorList>
    </citation>
    <scope>INTERACTION WITH RPAP3 AND URI1</scope>
</reference>
<reference key="51">
    <citation type="journal article" date="2017" name="Nat. Commun.">
        <title>WIPI3 and WIPI4 beta-propellers are scaffolds for LKB1-AMPK-TSC signalling circuits in the control of autophagy.</title>
        <authorList>
            <person name="Bakula D."/>
            <person name="Mueller A.J."/>
            <person name="Zuleger T."/>
            <person name="Takacs Z."/>
            <person name="Franz-Wachtel M."/>
            <person name="Thost A.K."/>
            <person name="Brigger D."/>
            <person name="Tschan M.P."/>
            <person name="Frickey T."/>
            <person name="Robenek H."/>
            <person name="Macek B."/>
            <person name="Proikas-Cezanne T."/>
        </authorList>
    </citation>
    <scope>INTERACTION WITH WDR45B</scope>
</reference>
<reference key="52">
    <citation type="journal article" date="2021" name="Nat. Commun.">
        <title>Endonuclease G promotes autophagy by suppressing mTOR signaling and activating the DNA damage response.</title>
        <authorList>
            <person name="Wang W."/>
            <person name="Li J."/>
            <person name="Tan J."/>
            <person name="Wang M."/>
            <person name="Yang J."/>
            <person name="Zhang Z.M."/>
            <person name="Li C."/>
            <person name="Basnakian A.G."/>
            <person name="Tang H.W."/>
            <person name="Perrimon N."/>
            <person name="Zhou Q."/>
        </authorList>
    </citation>
    <scope>INTERACTION WITH YWHAG</scope>
</reference>
<reference key="53">
    <citation type="journal article" date="2022" name="Mol. Cell">
        <title>The mTORC1-SLC4A7 axis stimulates bicarbonate import to enhance de novo nucleotide synthesis.</title>
        <authorList>
            <person name="Ali E.S."/>
            <person name="Liponska A."/>
            <person name="O'Hara B.P."/>
            <person name="Amici D.R."/>
            <person name="Torno M.D."/>
            <person name="Gao P."/>
            <person name="Asara J.M."/>
            <person name="Yap M.F."/>
            <person name="Mendillo M.L."/>
            <person name="Ben-Sahra I."/>
        </authorList>
    </citation>
    <scope>FUNCTION</scope>
</reference>
<reference evidence="62" key="54">
    <citation type="journal article" date="2021" name="Nat. Commun.">
        <title>Structural insights into TSC complex assembly and GAP activity on Rheb.</title>
        <authorList>
            <person name="Yang H."/>
            <person name="Yu Z."/>
            <person name="Chen X."/>
            <person name="Li J."/>
            <person name="Li N."/>
            <person name="Cheng J."/>
            <person name="Gao N."/>
            <person name="Yuan H.X."/>
            <person name="Ye D."/>
            <person name="Guan K.L."/>
            <person name="Xu Y."/>
        </authorList>
    </citation>
    <scope>STRUCTURE BY ELECTRON MICROSCOPY (4.40 ANGSTROMS) OF 50-1807 IN COMPLEX WITH TSC1 AND TBC1D7</scope>
    <scope>FUNCTION</scope>
    <scope>IDENTIFICATION IN THE TSC-TBC COMPLEX</scope>
    <scope>MUTAGENESIS OF ARG-1529; LEU-1533; LEU-1594; LYS-1638; ARG-1639; PHE-1666 AND ARG-1749</scope>
</reference>
<reference key="55">
    <citation type="journal article" date="1996" name="Hum. Mol. Genet.">
        <title>Novel mutations detected in the TSC2 gene from both sporadic and familial TSC patients.</title>
        <authorList>
            <person name="Wilson P.J."/>
            <person name="Ramesh V."/>
            <person name="Kristiansen A."/>
            <person name="Bove C."/>
            <person name="Jozwiak S."/>
            <person name="Kwiatkowski D.J."/>
            <person name="Short M.P."/>
            <person name="Haines J.L."/>
        </authorList>
    </citation>
    <scope>VARIANTS TSC2 ILE-449; TRP-611; LEU-1227; TRP-1240; PHE-1509 DEL AND GLU-1712</scope>
</reference>
<reference key="56">
    <citation type="journal article" date="1997" name="Hum. Mol. Genet.">
        <title>The GAP-related domain of tuberin, the product of the TSC2 gene, is a target for missense mutations in tuberous sclerosis.</title>
        <authorList>
            <person name="Maheshwar M.M."/>
            <person name="Cheadle J.P."/>
            <person name="Jones A.C."/>
            <person name="Myring J."/>
            <person name="Fryer A.E."/>
            <person name="Harris P.C."/>
            <person name="Sampson J.R."/>
        </authorList>
    </citation>
    <scope>VARIANTS TSC2 PHE-1509 DEL; MET-1594; LYS-1643; SER-1651; LEU-1675 AND LYS-1681</scope>
</reference>
<reference key="57">
    <citation type="journal article" date="1998" name="Am. J. Hum. Genet.">
        <title>Germ-line mutational analysis of the TSC2 gene in 90 tuberous-sclerosis patients.</title>
        <authorList>
            <person name="Au K.-S."/>
            <person name="Rodriguez J.A."/>
            <person name="Finch J.L."/>
            <person name="Volcik K.A."/>
            <person name="Roach E.S."/>
            <person name="Delgado M.R."/>
            <person name="Rodriguez E. Jr."/>
            <person name="Northrup H."/>
        </authorList>
    </citation>
    <scope>VARIANTS TSC2 PRO-292; GLN-611; TRP-905; GLU-1084; TRP-1200; VAL-1295; CYS-1549; ILE-1643 AND PHE-1750</scope>
</reference>
<reference key="58">
    <citation type="journal article" date="1998" name="Hum. Mutat.">
        <title>Exon scanning of the entire TSC2 gene for germline mutations in 40 unrelated patients with tuberous sclerosis.</title>
        <authorList>
            <person name="Beauchamp R.L."/>
            <person name="Banwell A."/>
            <person name="McNamara P."/>
            <person name="Jacobsen M."/>
            <person name="Higgins E."/>
            <person name="Northrup H."/>
            <person name="Short M.P."/>
            <person name="Sims K."/>
            <person name="Ozelius L."/>
            <person name="Ramesh V."/>
        </authorList>
    </citation>
    <scope>VARIANTS TSC2 ASP-407; GLN-611; MET-826; GLN-905; CYS-1650 AND TYR-1690</scope>
</reference>
<reference key="59">
    <citation type="journal article" date="1998" name="Neurogenetics">
        <title>Mutation and polymorphism analysis in the tuberous sclerosis 2 (TSC2) gene.</title>
        <authorList>
            <person name="Gilbert J.R."/>
            <person name="Guy V."/>
            <person name="Kumar A."/>
            <person name="Wolpert C."/>
            <person name="Kandt R."/>
            <person name="Aylesworth A."/>
            <person name="Roses A.D."/>
            <person name="Pericak-Vance M.A."/>
        </authorList>
    </citation>
    <scope>VARIANTS TSC2 TYR-227; LYS-331; ILE-486; LEU-816; MET-1144; SER-1315; LEU-1709; GLN-1743; PRO-1773 AND GLN-1783</scope>
    <scope>VARIANT HIS-1329</scope>
</reference>
<reference key="60">
    <citation type="journal article" date="1999" name="Am. J. Hum. Genet.">
        <title>Comprehensive mutation analysis of TSC1 and TSC2- and phenotypic correlations in 150 families with tuberous sclerosis.</title>
        <authorList>
            <person name="Jones A.C."/>
            <person name="Shyamsundar M.M."/>
            <person name="Thomas M.W."/>
            <person name="Maynard J."/>
            <person name="Idziaszczyk S.A."/>
            <person name="Tomkins S."/>
            <person name="Sampson J.R."/>
            <person name="Cheadle J.P."/>
        </authorList>
    </citation>
    <scope>VARIANTS TSC2 GLU-294; GLN-611; TRP-611; ASP-614; TYR-696; TRP-905; ARG-1497; ASN-1498; MET-1594; LYS-1643; SER-1651; LEU-1675; LYS-1681 AND PRO-1743</scope>
</reference>
<reference key="61">
    <citation type="journal article" date="1999" name="Am. J. Med. Genet.">
        <title>Novel TSC2 mutation in a patient with pulmonary tuberous sclerosis: lack of loss of heterozygosity in a lung cyst.</title>
        <authorList>
            <person name="Zhang H."/>
            <person name="Yamamoto T."/>
            <person name="Nanba E."/>
            <person name="Kitamura Y."/>
            <person name="Terada T."/>
            <person name="Akaboshi S."/>
            <person name="Yuasa I."/>
            <person name="Ohtani K."/>
            <person name="Nakamoto S."/>
            <person name="Takeshita K."/>
            <person name="Ohno K."/>
        </authorList>
    </citation>
    <scope>VARIANT TSC2 ARG-717</scope>
</reference>
<reference key="62">
    <citation type="journal article" date="1999" name="Ann. Hum. Genet.">
        <title>Superiority of denaturing high performance liquid chromatography over single-stranded conformation and conformation-sensitive gel electrophoresis for mutation detection in TSC2.</title>
        <authorList>
            <person name="Choy Y.S."/>
            <person name="Dabora S.L."/>
            <person name="Hall F."/>
            <person name="Ramesh V."/>
            <person name="Niida Y."/>
            <person name="Franz D."/>
            <person name="Kasprzyk-Obara J."/>
            <person name="Reeve M.P."/>
            <person name="Kwiatkowski D.J."/>
        </authorList>
    </citation>
    <scope>VARIANTS TSC2 ASN-258; PRO-261; PRO-361; ASP-407; SER-525; GLN-611 AND TRP-611</scope>
    <scope>VARIANTS GLN-309; GLN-367 AND ARG-593</scope>
</reference>
<reference key="63">
    <citation type="journal article" date="1999" name="Hum. Mutat.">
        <title>Analysis of both TSC1 and TSC2 for germline mutations in 126 unrelated patients with tuberous sclerosis.</title>
        <authorList>
            <person name="Niida Y."/>
            <person name="Lawrence-Smith N."/>
            <person name="Banwell A."/>
            <person name="Hammer E."/>
            <person name="Lewis J."/>
            <person name="Beauchamp R.L."/>
            <person name="Sims K."/>
            <person name="Ramesh V."/>
            <person name="Ozelius L."/>
        </authorList>
    </citation>
    <scope>VARIANTS TSC2 SER-525; MET-599; GLN-611; VAL-895; TYR-1620; LEU-1675 AND THR-1704</scope>
    <source>
        <tissue>Blood</tissue>
        <tissue>Lymphoblast</tissue>
    </source>
</reference>
<reference key="64">
    <citation type="journal article" date="1999" name="J. Hum. Genet.">
        <title>Mutational analysis of TSC1 and TSC2 genes in Japanese patients with tuberous sclerosis complex.</title>
        <authorList>
            <person name="Zhang H."/>
            <person name="Nanba E."/>
            <person name="Yamamoto T."/>
            <person name="Ninomiya H."/>
            <person name="Ohno K."/>
            <person name="Mizuguchi M."/>
            <person name="Takeshita K."/>
        </authorList>
    </citation>
    <scope>VARIANTS TSC2 ARG-137; PHE-320; GLN-611; ASN-647; ARG-717; GLU-769; MET-963 AND LEU-1675</scope>
    <scope>INVOLVEMENT IN TSC2</scope>
</reference>
<reference key="65">
    <citation type="journal article" date="2000" name="Am. J. Med. Genet.">
        <title>Analysis of all exons of TSC1 and TSC2 genes for germline mutations in Japanese patients with tuberous sclerosis: report of 10 mutations.</title>
        <authorList>
            <person name="Yamashita Y."/>
            <person name="Ono J."/>
            <person name="Okada S."/>
            <person name="Wataya-Kaneda M."/>
            <person name="Yoshikawa K."/>
            <person name="Nishizawa M."/>
            <person name="Hirayama Y."/>
            <person name="Kobayashi E."/>
            <person name="Seyama K."/>
            <person name="Hino O."/>
        </authorList>
    </citation>
    <scope>VARIANTS TSC2 PHE-320; TRP-611; TRP-905; PRO-1744 AND 1746-HIS--ARG-1751 DEL</scope>
    <source>
        <tissue>Peripheral blood leukocyte</tissue>
    </source>
</reference>
<reference key="66">
    <citation type="journal article" date="2000" name="Proc. Natl. Acad. Sci. U.S.A.">
        <title>Mutations in the tuberous sclerosis complex gene TSC2 are a cause of sporadic pulmonary lymphangioleiomyomatosis.</title>
        <authorList>
            <person name="Carsillo T."/>
            <person name="Astrinidis A."/>
            <person name="Henske E.P."/>
        </authorList>
    </citation>
    <scope>VARIANT LAM GLN-611</scope>
</reference>
<reference key="67">
    <citation type="journal article" date="2004" name="Hum. Mutat.">
        <title>Novel TSC2 mutations and decreased expression of tuberin in cultured tumor cells with an insertion mutation.</title>
        <authorList>
            <person name="Feng J.-H."/>
            <person name="Yamamoto T."/>
            <person name="Nanba E."/>
            <person name="Ninomiya H."/>
            <person name="Oka A."/>
            <person name="Ohno K."/>
        </authorList>
    </citation>
    <scope>VARIANTS TSC2 SER-1651; PHE-1653; LEU-1675 AND 1746-HIS--ARG-1751 DEL</scope>
    <scope>VARIANTS THR-607; VAL-862; SER-1429 AND ARG-1450</scope>
</reference>
<reference key="68">
    <citation type="journal article" date="2005" name="Acta Neurol. Scand.">
        <title>Mutation and polymorphism analysis of TSC1 and TSC2 genes in Indian patients with tuberous sclerosis complex.</title>
        <authorList>
            <person name="Ali M."/>
            <person name="Girimaji S.C."/>
            <person name="Markandaya M."/>
            <person name="Shukla A.K."/>
            <person name="Sacchidanand S."/>
            <person name="Kumar A."/>
        </authorList>
    </citation>
    <scope>VARIANTS TSC2 GLN-611; TRP-611 AND PRO-1027</scope>
    <scope>VARIANTS GLN-367; ARG-1341; ASN-1636 AND LEU-1673</scope>
</reference>
<gene>
    <name evidence="57 61" type="primary">TSC2</name>
    <name type="synonym">TSC4</name>
</gene>
<keyword id="KW-0002">3D-structure</keyword>
<keyword id="KW-0025">Alternative splicing</keyword>
<keyword id="KW-0963">Cytoplasm</keyword>
<keyword id="KW-0225">Disease variant</keyword>
<keyword id="KW-0887">Epilepsy</keyword>
<keyword id="KW-0343">GTPase activation</keyword>
<keyword id="KW-0945">Host-virus interaction</keyword>
<keyword id="KW-0458">Lysosome</keyword>
<keyword id="KW-0472">Membrane</keyword>
<keyword id="KW-0597">Phosphoprotein</keyword>
<keyword id="KW-1267">Proteomics identification</keyword>
<keyword id="KW-1185">Reference proteome</keyword>
<keyword id="KW-0043">Tumor suppressor</keyword>
<keyword id="KW-0832">Ubl conjugation</keyword>
<accession>P49815</accession>
<accession>A7E2E2</accession>
<accession>B4DIL8</accession>
<accession>B4DIQ7</accession>
<accession>B4DRN2</accession>
<accession>B7Z2B8</accession>
<accession>C9J378</accession>
<accession>O75275</accession>
<accession>Q4LE71</accession>
<accession>Q8TAZ1</accession>
<organism>
    <name type="scientific">Homo sapiens</name>
    <name type="common">Human</name>
    <dbReference type="NCBI Taxonomy" id="9606"/>
    <lineage>
        <taxon>Eukaryota</taxon>
        <taxon>Metazoa</taxon>
        <taxon>Chordata</taxon>
        <taxon>Craniata</taxon>
        <taxon>Vertebrata</taxon>
        <taxon>Euteleostomi</taxon>
        <taxon>Mammalia</taxon>
        <taxon>Eutheria</taxon>
        <taxon>Euarchontoglires</taxon>
        <taxon>Primates</taxon>
        <taxon>Haplorrhini</taxon>
        <taxon>Catarrhini</taxon>
        <taxon>Hominidae</taxon>
        <taxon>Homo</taxon>
    </lineage>
</organism>
<evidence type="ECO:0000250" key="1">
    <source>
        <dbReference type="UniProtKB" id="P49816"/>
    </source>
</evidence>
<evidence type="ECO:0000250" key="2">
    <source>
        <dbReference type="UniProtKB" id="Q61037"/>
    </source>
</evidence>
<evidence type="ECO:0000255" key="3">
    <source>
        <dbReference type="PROSITE-ProRule" id="PRU00165"/>
    </source>
</evidence>
<evidence type="ECO:0000256" key="4">
    <source>
        <dbReference type="SAM" id="MobiDB-lite"/>
    </source>
</evidence>
<evidence type="ECO:0000269" key="5">
    <source>
    </source>
</evidence>
<evidence type="ECO:0000269" key="6">
    <source>
    </source>
</evidence>
<evidence type="ECO:0000269" key="7">
    <source>
    </source>
</evidence>
<evidence type="ECO:0000269" key="8">
    <source>
    </source>
</evidence>
<evidence type="ECO:0000269" key="9">
    <source>
    </source>
</evidence>
<evidence type="ECO:0000269" key="10">
    <source>
    </source>
</evidence>
<evidence type="ECO:0000269" key="11">
    <source>
    </source>
</evidence>
<evidence type="ECO:0000269" key="12">
    <source>
    </source>
</evidence>
<evidence type="ECO:0000269" key="13">
    <source>
    </source>
</evidence>
<evidence type="ECO:0000269" key="14">
    <source>
    </source>
</evidence>
<evidence type="ECO:0000269" key="15">
    <source>
    </source>
</evidence>
<evidence type="ECO:0000269" key="16">
    <source>
    </source>
</evidence>
<evidence type="ECO:0000269" key="17">
    <source>
    </source>
</evidence>
<evidence type="ECO:0000269" key="18">
    <source>
    </source>
</evidence>
<evidence type="ECO:0000269" key="19">
    <source>
    </source>
</evidence>
<evidence type="ECO:0000269" key="20">
    <source>
    </source>
</evidence>
<evidence type="ECO:0000269" key="21">
    <source>
    </source>
</evidence>
<evidence type="ECO:0000269" key="22">
    <source>
    </source>
</evidence>
<evidence type="ECO:0000269" key="23">
    <source>
    </source>
</evidence>
<evidence type="ECO:0000269" key="24">
    <source>
    </source>
</evidence>
<evidence type="ECO:0000269" key="25">
    <source>
    </source>
</evidence>
<evidence type="ECO:0000269" key="26">
    <source>
    </source>
</evidence>
<evidence type="ECO:0000269" key="27">
    <source>
    </source>
</evidence>
<evidence type="ECO:0000269" key="28">
    <source>
    </source>
</evidence>
<evidence type="ECO:0000269" key="29">
    <source>
    </source>
</evidence>
<evidence type="ECO:0000269" key="30">
    <source>
    </source>
</evidence>
<evidence type="ECO:0000269" key="31">
    <source>
    </source>
</evidence>
<evidence type="ECO:0000269" key="32">
    <source>
    </source>
</evidence>
<evidence type="ECO:0000269" key="33">
    <source>
    </source>
</evidence>
<evidence type="ECO:0000269" key="34">
    <source>
    </source>
</evidence>
<evidence type="ECO:0000269" key="35">
    <source>
    </source>
</evidence>
<evidence type="ECO:0000269" key="36">
    <source>
    </source>
</evidence>
<evidence type="ECO:0000269" key="37">
    <source>
    </source>
</evidence>
<evidence type="ECO:0000269" key="38">
    <source>
    </source>
</evidence>
<evidence type="ECO:0000269" key="39">
    <source>
    </source>
</evidence>
<evidence type="ECO:0000269" key="40">
    <source>
    </source>
</evidence>
<evidence type="ECO:0000269" key="41">
    <source>
    </source>
</evidence>
<evidence type="ECO:0000269" key="42">
    <source>
    </source>
</evidence>
<evidence type="ECO:0000269" key="43">
    <source>
    </source>
</evidence>
<evidence type="ECO:0000269" key="44">
    <source>
    </source>
</evidence>
<evidence type="ECO:0000269" key="45">
    <source>
    </source>
</evidence>
<evidence type="ECO:0000269" key="46">
    <source>
    </source>
</evidence>
<evidence type="ECO:0000269" key="47">
    <source>
    </source>
</evidence>
<evidence type="ECO:0000269" key="48">
    <source>
    </source>
</evidence>
<evidence type="ECO:0000269" key="49">
    <source>
    </source>
</evidence>
<evidence type="ECO:0000269" key="50">
    <source>
    </source>
</evidence>
<evidence type="ECO:0000269" key="51">
    <source>
    </source>
</evidence>
<evidence type="ECO:0000269" key="52">
    <source>
    </source>
</evidence>
<evidence type="ECO:0000269" key="53">
    <source>
    </source>
</evidence>
<evidence type="ECO:0000303" key="54">
    <source>
    </source>
</evidence>
<evidence type="ECO:0000303" key="55">
    <source>
    </source>
</evidence>
<evidence type="ECO:0000303" key="56">
    <source>
    </source>
</evidence>
<evidence type="ECO:0000303" key="57">
    <source>
    </source>
</evidence>
<evidence type="ECO:0000303" key="58">
    <source>
    </source>
</evidence>
<evidence type="ECO:0000303" key="59">
    <source ref="7"/>
</evidence>
<evidence type="ECO:0000305" key="60"/>
<evidence type="ECO:0000312" key="61">
    <source>
        <dbReference type="HGNC" id="HGNC:12363"/>
    </source>
</evidence>
<evidence type="ECO:0007744" key="62">
    <source>
        <dbReference type="PDB" id="7DL2"/>
    </source>
</evidence>
<evidence type="ECO:0007744" key="63">
    <source>
    </source>
</evidence>
<evidence type="ECO:0007744" key="64">
    <source>
    </source>
</evidence>
<evidence type="ECO:0007744" key="65">
    <source>
    </source>
</evidence>
<evidence type="ECO:0007744" key="66">
    <source>
    </source>
</evidence>
<evidence type="ECO:0007744" key="67">
    <source>
    </source>
</evidence>
<evidence type="ECO:0007744" key="68">
    <source>
    </source>
</evidence>
<evidence type="ECO:0007829" key="69">
    <source>
        <dbReference type="PDB" id="9CE3"/>
    </source>
</evidence>
<sequence>MAKPTSKDSGLKEKFKILLGLGTPRPNPRSAEGKQTEFIITAEILRELSMECGLNNRIRMIGQICEVAKTKKFEEHAVEALWKAVADLLQPERPLEARHAVLALLKAIVQGQGERLGVLRALFFKVIKDYPSNEDLHERLEVFKALTDNGRHITYLEEELADFVLQWMDVGLSSEFLLVLVNLVKFNSCYLDEYIARMVQMICLLCVRTASSVDIEVSLQVLDAVVCYNCLPAESLPLFIVTLCRTINVKELCEPCWKLMRNLLGTHLGHSAIYNMCHLMEDRAYMEDAPLLRGAVFFVGMALWGAHRLYSLRNSPTSVLPSFYQAMACPNEVVSYEIVLSITRLIKKYRKELQVVAWDILLNIIERLLQQLQTLDSPELRTIVHDLLTTVEELCDQNEFHGSQERYFELVERCADQRPESSLLNLISYRAQSIHPAKDGWIQNLQALMERFFRSESRGAVRIKVLDVLSFVLLINRQFYEEELINSVVISQLSHIPEDKDHQVRKLATQLLVDLAEGCHTHHFNSLLDIIEKVMARSLSPPPELEERDVAAYSASLEDVKTAVLGLLVILQTKLYTLPASHATRVYEMLVSHIQLHYKHSYTLPIASSIRLQAFDFLLLLRADSLHRLGLPNKDGVVRFSPYCVCDYMEPERGSEKKTSGPLSPPTGPPGPAPAGPAVRLGSVPYSLLFRVLLQCLKQESDWKVLKLVLGRLPESLRYKVLIFTSPCSVDQLCSALCSMLSGPKTLERLRGAPEGFSRTDLHLAVVPVLTALISYHNYLDKTKQREMVYCLEQGLIHRCASQCVVALSICSVEMPDIIIKALPVLVVKLTHISATASMAVPLLEFLSTLARLPHLYRNFAAEQYASVFAISLPYTNPSKFNQYIVCLAHHVIAMWFIRCRLPFRKDFVPFITKGLRSNVLLSFDDTPEKDSFRARSTSLNERPKSLRIARPPKQGLNNSPPVKEFKESSAAEAFRCRSISVSEHVVRSRIQTSLTSASLGSADENSVAQADDSLKNLHLELTETCLDMMARYVFSNFTAVPKRSPVGEFLLAGGRTKTWLVGNKLVTVTTSVGTGTRSLLGLDSGELQSGPESSSSPGVHVRQTKEAPAKLESQAGQQVSRGARDRVRSMSGGHGLRVGALDVPASQFLGSATSPGPRTAPAAKPEKASAGTRVPVQEKTNLAAYVPLLTQGWAEILVRRPTGNTSWLMSLENPLSPFSSDINNMPLQELSNALMAAERFKEHRDTALYKSLSVPAASTAKPPPLPRSNTVASFSSLYQSSCQGQLHRSVSWADSAVVMEEGSPGEVPVLVEPPGLEDVEAALGMDRRTDAYSRSSSVSSQEEKSLHAEELVGRGIPIERVVSSEGGRPSVDLSFQPSQPLSKSSSSPELQTLQDILGDPGDKADVGRLSPEVKARSQSGTLDGESAAWSASGEDSRGQPEGPLPSSSPRSPSGLRPRGYTISDSAPSRRGKRVERDALKSRATASNAEKVPGINPSFVFLQLYHSPFFGDESNKPILLPNESQSFERSVQLLDQIPSYDTHKIAVLYVGEGQSNSELAILSNEHGSYRYTEFLTGLGRLIELKDCQPDKVYLGGLDVCGEDGQFTYCWHDDIMQAVFHIATLMPTKDVDKHRCDKKRHLGNDFVSIVYNDSGEDFKLGTIKGQFNFVHVIVTPLDYECNLVSLQCRKDMEGLVDTSVAKIVSDRNLPFVARQMALHANMASQVHHSRSNPTDIYPSKWIARLRHIKRLRQRICEEAAYSNPSLPLVHPPSHSKAPAQTPAEPTPGYEVGQRKRLISSVEDFTEFV</sequence>
<feature type="chain" id="PRO_0000065654" description="Tuberin">
    <location>
        <begin position="1"/>
        <end position="1807"/>
    </location>
</feature>
<feature type="domain" description="Rap-GAP" evidence="3">
    <location>
        <begin position="1531"/>
        <end position="1758"/>
    </location>
</feature>
<feature type="region of interest" description="Required for interaction with TSC1">
    <location>
        <begin position="1"/>
        <end position="400"/>
    </location>
</feature>
<feature type="region of interest" description="Disordered" evidence="4">
    <location>
        <begin position="655"/>
        <end position="676"/>
    </location>
</feature>
<feature type="region of interest" description="Disordered" evidence="4">
    <location>
        <begin position="930"/>
        <end position="964"/>
    </location>
</feature>
<feature type="region of interest" description="Disordered" evidence="4">
    <location>
        <begin position="1083"/>
        <end position="1132"/>
    </location>
</feature>
<feature type="region of interest" description="Disordered" evidence="4">
    <location>
        <begin position="1150"/>
        <end position="1174"/>
    </location>
</feature>
<feature type="region of interest" description="Disordered" evidence="4">
    <location>
        <begin position="1331"/>
        <end position="1352"/>
    </location>
</feature>
<feature type="region of interest" description="Disordered" evidence="4">
    <location>
        <begin position="1364"/>
        <end position="1488"/>
    </location>
</feature>
<feature type="region of interest" description="Disordered" evidence="4">
    <location>
        <begin position="1765"/>
        <end position="1793"/>
    </location>
</feature>
<feature type="compositionally biased region" description="Pro residues" evidence="4">
    <location>
        <begin position="663"/>
        <end position="675"/>
    </location>
</feature>
<feature type="compositionally biased region" description="Polar residues" evidence="4">
    <location>
        <begin position="1087"/>
        <end position="1098"/>
    </location>
</feature>
<feature type="compositionally biased region" description="Basic and acidic residues" evidence="4">
    <location>
        <begin position="1342"/>
        <end position="1352"/>
    </location>
</feature>
<feature type="compositionally biased region" description="Low complexity" evidence="4">
    <location>
        <begin position="1374"/>
        <end position="1392"/>
    </location>
</feature>
<feature type="compositionally biased region" description="Basic and acidic residues" evidence="4">
    <location>
        <begin position="1401"/>
        <end position="1416"/>
    </location>
</feature>
<feature type="compositionally biased region" description="Low complexity" evidence="4">
    <location>
        <begin position="1445"/>
        <end position="1460"/>
    </location>
</feature>
<feature type="compositionally biased region" description="Low complexity" evidence="4">
    <location>
        <begin position="1765"/>
        <end position="1774"/>
    </location>
</feature>
<feature type="modified residue" description="Phosphoserine" evidence="28">
    <location>
        <position position="540"/>
    </location>
</feature>
<feature type="modified residue" description="Phosphoserine" evidence="28">
    <location>
        <position position="664"/>
    </location>
</feature>
<feature type="modified residue" description="Phosphothreonine" evidence="63">
    <location>
        <position position="927"/>
    </location>
</feature>
<feature type="modified residue" description="Phosphoserine; by PKB/AKT1" evidence="15 28 35">
    <location>
        <position position="939"/>
    </location>
</feature>
<feature type="modified residue" description="Phosphoserine" evidence="63 67">
    <location>
        <position position="981"/>
    </location>
</feature>
<feature type="modified residue" description="Phosphoserine" evidence="1">
    <location>
        <position position="1130"/>
    </location>
</feature>
<feature type="modified residue" description="Phosphoserine" evidence="63 66">
    <location>
        <position position="1132"/>
    </location>
</feature>
<feature type="modified residue" description="Phosphoserine" evidence="63 64">
    <location>
        <position position="1155"/>
    </location>
</feature>
<feature type="modified residue" description="Phosphothreonine; by AMPK" evidence="21">
    <location>
        <position position="1271"/>
    </location>
</feature>
<feature type="modified residue" description="Phosphoserine" evidence="63">
    <location>
        <position position="1337"/>
    </location>
</feature>
<feature type="modified residue" description="Phosphoserine" evidence="63">
    <location>
        <position position="1338"/>
    </location>
</feature>
<feature type="modified residue" description="Phosphoserine" evidence="65 67">
    <location>
        <position position="1346"/>
    </location>
</feature>
<feature type="modified residue" description="Phosphoserine" evidence="67">
    <location>
        <position position="1364"/>
    </location>
</feature>
<feature type="modified residue" description="Phosphoserine; by AMPK" evidence="21 26 63">
    <location>
        <position position="1387"/>
    </location>
</feature>
<feature type="modified residue" description="Phosphoserine" evidence="63 67 68">
    <location>
        <position position="1411"/>
    </location>
</feature>
<feature type="modified residue" description="Phosphoserine" evidence="26">
    <location>
        <position position="1418"/>
    </location>
</feature>
<feature type="modified residue" description="Phosphoserine" evidence="26 63 67">
    <location>
        <position position="1420"/>
    </location>
</feature>
<feature type="modified residue" description="Phosphoserine" evidence="63 67">
    <location>
        <position position="1452"/>
    </location>
</feature>
<feature type="modified residue" description="Phosphothreonine; by PKB/AKT1" evidence="15 28 35 64">
    <location>
        <position position="1462"/>
    </location>
</feature>
<feature type="modified residue" description="Phosphoserine" evidence="2">
    <location>
        <position position="1764"/>
    </location>
</feature>
<feature type="modified residue" description="Phosphoserine; by RPS6KA1" evidence="24 28 64 65">
    <location>
        <position position="1798"/>
    </location>
</feature>
<feature type="modified residue" description="Phosphoserine" evidence="67">
    <location>
        <position position="1799"/>
    </location>
</feature>
<feature type="splice variant" id="VSP_054163" description="In isoform 7." evidence="54">
    <location>
        <begin position="1"/>
        <end position="49"/>
    </location>
</feature>
<feature type="splice variant" id="VSP_038355" description="In isoform 6." evidence="54">
    <location>
        <begin position="76"/>
        <end position="112"/>
    </location>
</feature>
<feature type="splice variant" id="VSP_055896" description="In isoform 8." evidence="54 56">
    <original>GERLGVLRALFFKVIKDYPSNEDLHERLEVFKALTDNGRHITYLEEELADFVLQWMDVGLSSEFLLVLVNLVKFNSCYLDEYIARMVQMICLLCVRTASSVDIEVSLQVLDAVVCYNCLPAESLPLF</original>
    <variation>VRPRATLGWVTSGCPLTVLSLLGRVWTPASVSCWAQGLGADGLWSWMACGVSWCHEVCVTVGTASSPVNRWSLHLPLMGCSGDHMRQFSQSAEIVPGSWCGATVLFCPCTLSGPLPCSLHSICAGLG</variation>
    <location>
        <begin position="113"/>
        <end position="239"/>
    </location>
</feature>
<feature type="splice variant" id="VSP_055897" description="In isoform 8." evidence="54 56">
    <location>
        <begin position="240"/>
        <end position="1807"/>
    </location>
</feature>
<feature type="splice variant" id="VSP_004471" description="In isoform 3 and isoform 5." evidence="54 59">
    <location>
        <begin position="946"/>
        <end position="989"/>
    </location>
</feature>
<feature type="splice variant" id="VSP_004470" description="In isoform 2, isoform 6 and isoform 7." evidence="54">
    <location>
        <begin position="946"/>
        <end position="988"/>
    </location>
</feature>
<feature type="splice variant" id="VSP_004472" description="In isoform 4, isoform 5, isoform 6 and isoform 7." evidence="54 55 59">
    <location>
        <begin position="1272"/>
        <end position="1294"/>
    </location>
</feature>
<feature type="sequence variant" id="VAR_008019" description="In dbSNP:rs1051616." evidence="47">
    <original>P</original>
    <variation>T</variation>
    <location>
        <position position="94"/>
    </location>
</feature>
<feature type="sequence variant" id="VAR_009415" description="In TSC2; uncertain significance; dbSNP:rs45517107." evidence="8">
    <original>H</original>
    <variation>R</variation>
    <location>
        <position position="137"/>
    </location>
</feature>
<feature type="sequence variant" id="VAR_009416" description="In dbSNP:rs45517109.">
    <original>L</original>
    <variation>V</variation>
    <location>
        <position position="160"/>
    </location>
</feature>
<feature type="sequence variant" id="VAR_008020" description="In TSC2; dbSNP:rs45517122." evidence="11">
    <original>C</original>
    <variation>Y</variation>
    <location>
        <position position="227"/>
    </location>
</feature>
<feature type="sequence variant" id="VAR_009417" description="In TSC2; dbSNP:rs137854875." evidence="12">
    <original>K</original>
    <variation>N</variation>
    <location>
        <position position="258"/>
    </location>
</feature>
<feature type="sequence variant" id="VAR_009418" description="In TSC2; dbSNP:rs45502703." evidence="12">
    <original>R</original>
    <variation>P</variation>
    <location>
        <position position="261"/>
    </location>
</feature>
<feature type="sequence variant" id="VAR_009419" description="In dbSNP:rs45517130.">
    <original>R</original>
    <variation>W</variation>
    <location>
        <position position="261"/>
    </location>
</feature>
<feature type="sequence variant" id="VAR_009420" description="In dbSNP:rs45517136.">
    <original>M</original>
    <variation>T</variation>
    <location>
        <position position="286"/>
    </location>
</feature>
<feature type="sequence variant" id="VAR_009421" description="In dbSNP:rs1800748.">
    <original>M</original>
    <variation>V</variation>
    <location>
        <position position="286"/>
    </location>
</feature>
<feature type="sequence variant" id="VAR_005646" description="In TSC2; dbSNP:rs45517138." evidence="51">
    <original>L</original>
    <variation>P</variation>
    <location>
        <position position="292"/>
    </location>
</feature>
<feature type="sequence variant" id="VAR_009422" description="In TSC2; dbSNP:rs45487497." evidence="6">
    <original>G</original>
    <variation>E</variation>
    <location>
        <position position="294"/>
    </location>
</feature>
<feature type="sequence variant" id="VAR_009423" description="In TSC2.">
    <original>W</original>
    <variation>WGMALW</variation>
    <location>
        <position position="304"/>
    </location>
</feature>
<feature type="sequence variant" id="VAR_009424" description="In dbSNP:rs137853986." evidence="12">
    <original>L</original>
    <variation>Q</variation>
    <location>
        <position position="309"/>
    </location>
</feature>
<feature type="sequence variant" id="VAR_009425" description="In TSC2; uncertain significance; dbSNP:rs1131825." evidence="8 10 47">
    <original>L</original>
    <variation>F</variation>
    <location>
        <position position="320"/>
    </location>
</feature>
<feature type="sequence variant" id="VAR_008021" description="In TSC2; dbSNP:rs45517153." evidence="11">
    <original>N</original>
    <variation>K</variation>
    <location>
        <position position="331"/>
    </location>
</feature>
<feature type="sequence variant" id="VAR_009426" description="In TSC2; dbSNP:rs45517147." evidence="12">
    <original>L</original>
    <variation>P</variation>
    <location>
        <position position="361"/>
    </location>
</feature>
<feature type="sequence variant" id="VAR_009427" description="In TSC2; dbSNP:rs137854367.">
    <location>
        <position position="365"/>
    </location>
</feature>
<feature type="sequence variant" id="VAR_009428" description="In dbSNP:rs1800725." evidence="12 25">
    <original>R</original>
    <variation>Q</variation>
    <location>
        <position position="367"/>
    </location>
</feature>
<feature type="sequence variant" id="VAR_009429" description="In dbSNP:rs45517154.">
    <original>P</original>
    <variation>L</variation>
    <location>
        <position position="378"/>
    </location>
</feature>
<feature type="sequence variant" id="VAR_005647" description="In TSC2; dbSNP:rs45517156." evidence="12 53">
    <original>Y</original>
    <variation>D</variation>
    <location>
        <position position="407"/>
    </location>
</feature>
<feature type="sequence variant" id="VAR_009430" description="In dbSNP:rs45484298.">
    <original>G</original>
    <variation>S</variation>
    <location>
        <position position="440"/>
    </location>
</feature>
<feature type="sequence variant" id="VAR_005648" description="In TSC2; dbSNP:rs45443091." evidence="48">
    <original>M</original>
    <variation>I</variation>
    <location>
        <position position="449"/>
    </location>
</feature>
<feature type="sequence variant" id="VAR_009431" description="In dbSNP:rs45517171.">
    <original>I</original>
    <variation>V</variation>
    <location>
        <position position="463"/>
    </location>
</feature>
<feature type="sequence variant" id="VAR_008022" description="In TSC2; dbSNP:rs45486599." evidence="11">
    <original>N</original>
    <variation>I</variation>
    <location>
        <position position="486"/>
    </location>
</feature>
<feature type="sequence variant" id="VAR_008023" description="In dbSNP:rs45517175.">
    <original>I</original>
    <variation>V</variation>
    <location>
        <position position="490"/>
    </location>
</feature>
<feature type="sequence variant" id="VAR_009432" description="In TSC2; dbSNP:rs45457694." evidence="7 12">
    <original>N</original>
    <variation>S</variation>
    <location>
        <position position="525"/>
    </location>
</feature>
<feature type="sequence variant" id="VAR_008024" description="In dbSNP:rs45517187.">
    <original>A</original>
    <variation>V</variation>
    <location>
        <position position="536"/>
    </location>
</feature>
<feature type="sequence variant" id="VAR_009433" description="In dbSNP:rs1800729.">
    <original>A</original>
    <variation>T</variation>
    <location>
        <position position="583"/>
    </location>
</feature>
<feature type="sequence variant" id="VAR_009434" description="In dbSNP:rs45517198." evidence="12">
    <original>H</original>
    <variation>R</variation>
    <location>
        <position position="593"/>
    </location>
</feature>
<feature type="sequence variant" id="VAR_009435" description="In TSC2; impairs repression of EIF4EBP1 phosphorylation; dbSNP:rs45517202." evidence="7 17">
    <original>K</original>
    <variation>M</variation>
    <location>
        <position position="599"/>
    </location>
</feature>
<feature type="sequence variant" id="VAR_005649" description="In dbSNP:rs45517203." evidence="22">
    <original>A</original>
    <variation>T</variation>
    <location>
        <position position="607"/>
    </location>
</feature>
<feature type="sequence variant" id="VAR_005650" description="In TSC2 and LAM; impairs phosphorylation at S-1387, S-1418 and S-1420; enhances ubiquitination by MYCBP2; dbSNP:rs28934872." evidence="6 7 8 12 13 25 26 28 51 53">
    <original>R</original>
    <variation>Q</variation>
    <location>
        <position position="611"/>
    </location>
</feature>
<feature type="sequence variant" id="VAR_005651" description="In TSC2; impairs phosphorylation at S-1387, S-1418 and S-1420; dbSNP:rs45469298." evidence="6 10 12 25 26 48">
    <original>R</original>
    <variation>W</variation>
    <location>
        <position position="611"/>
    </location>
</feature>
<feature type="sequence variant" id="VAR_009436" description="In TSC2; dbSNP:rs45454398." evidence="6">
    <original>A</original>
    <variation>D</variation>
    <location>
        <position position="614"/>
    </location>
</feature>
<feature type="sequence variant" id="VAR_008025" description="In dbSNP:rs45481105.">
    <original>F</original>
    <variation>S</variation>
    <location>
        <position position="615"/>
    </location>
</feature>
<feature type="sequence variant" id="VAR_060584" description="In dbSNP:rs1131826." evidence="47">
    <original>L</original>
    <variation>F</variation>
    <location>
        <position position="619"/>
    </location>
</feature>
<feature type="sequence variant" id="VAR_009437" description="In TSC2; uncertain significance; dbSNP:rs45509392." evidence="8">
    <original>D</original>
    <variation>N</variation>
    <location>
        <position position="647"/>
    </location>
</feature>
<feature type="sequence variant" id="VAR_009438" description="In TSC2.">
    <location>
        <position position="694"/>
    </location>
</feature>
<feature type="sequence variant" id="VAR_009439" description="In TSC2; dbSNP:rs45486196." evidence="6">
    <original>C</original>
    <variation>Y</variation>
    <location>
        <position position="696"/>
    </location>
</feature>
<feature type="sequence variant" id="VAR_009440" description="In TSC2; dbSNP:rs45517214." evidence="5 8">
    <original>L</original>
    <variation>R</variation>
    <location>
        <position position="717"/>
    </location>
</feature>
<feature type="sequence variant" id="VAR_009441" description="In TSC2; uncertain significance; dbSNP:rs45499191." evidence="8">
    <original>V</original>
    <variation>E</variation>
    <location>
        <position position="769"/>
    </location>
</feature>
<feature type="sequence variant" id="VAR_060585" description="In dbSNP:rs1051621." evidence="46 47">
    <original>S</original>
    <variation>R</variation>
    <location>
        <position position="802"/>
    </location>
</feature>
<feature type="sequence variant" id="VAR_008026" description="In TSC2; dbSNP:rs45517236." evidence="11">
    <original>P</original>
    <variation>L</variation>
    <location>
        <position position="816"/>
    </location>
</feature>
<feature type="sequence variant" id="VAR_005652" description="In TSC2; dbSNP:rs45517238." evidence="53">
    <original>L</original>
    <variation>M</variation>
    <location>
        <position position="826"/>
    </location>
</feature>
<feature type="sequence variant" id="VAR_018600" description="In dbSNP:rs45517249." evidence="22">
    <original>A</original>
    <variation>V</variation>
    <location>
        <position position="862"/>
    </location>
</feature>
<feature type="sequence variant" id="VAR_009442" description="In TSC2; dbSNP:rs45470695." evidence="7">
    <original>M</original>
    <variation>V</variation>
    <location>
        <position position="895"/>
    </location>
</feature>
<feature type="sequence variant" id="VAR_005653" description="In TSC2; dbSNP:rs45517259." evidence="53">
    <original>R</original>
    <variation>Q</variation>
    <location>
        <position position="905"/>
    </location>
</feature>
<feature type="sequence variant" id="VAR_005654" description="In TSC2; dbSNP:rs45517258." evidence="6 10 51">
    <original>R</original>
    <variation>W</variation>
    <location>
        <position position="905"/>
    </location>
</feature>
<feature type="sequence variant" id="VAR_009443" description="In TSC2; uncertain significance; dbSNP:rs45517275." evidence="8">
    <original>V</original>
    <variation>M</variation>
    <location>
        <position position="963"/>
    </location>
</feature>
<feature type="sequence variant" id="VAR_022919" description="In TSC2; dbSNP:rs45438192." evidence="25">
    <original>L</original>
    <variation>P</variation>
    <location>
        <position position="1027"/>
    </location>
</feature>
<feature type="sequence variant" id="VAR_005655" description="In TSC2; dbSNP:rs45517286." evidence="51">
    <original>D</original>
    <variation>E</variation>
    <location>
        <position position="1084"/>
    </location>
</feature>
<feature type="sequence variant" id="VAR_057014" description="In dbSNP:rs34870424.">
    <original>A</original>
    <variation>V</variation>
    <location>
        <position position="1141"/>
    </location>
</feature>
<feature type="sequence variant" id="VAR_008027" description="In TSC2; dbSNP:rs45517294." evidence="11">
    <original>V</original>
    <variation>M</variation>
    <location>
        <position position="1144"/>
    </location>
</feature>
<feature type="sequence variant" id="VAR_005656" description="In TSC2; dbSNP:rs45438205." evidence="51">
    <original>R</original>
    <variation>W</variation>
    <location>
        <position position="1200"/>
    </location>
</feature>
<feature type="sequence variant" id="VAR_005657" description="In TSC2; dbSNP:rs2090157247." evidence="48">
    <original>P</original>
    <variation>L</variation>
    <location>
        <position position="1227"/>
    </location>
</feature>
<feature type="sequence variant" id="VAR_005658" description="In TSC2." evidence="48">
    <original>R</original>
    <variation>W</variation>
    <location>
        <position position="1240"/>
    </location>
</feature>
<feature type="sequence variant" id="VAR_009444" description="In dbSNP:rs45446700.">
    <original>S</original>
    <variation>G</variation>
    <location>
        <position position="1282"/>
    </location>
</feature>
<feature type="sequence variant" id="VAR_005659" description="In TSC2; dbSNP:rs2090416468." evidence="51">
    <original>D</original>
    <variation>V</variation>
    <location>
        <position position="1295"/>
    </location>
</feature>
<feature type="sequence variant" id="VAR_008028" description="In TSC2; dbSNP:rs397514916." evidence="11">
    <original>P</original>
    <variation>S</variation>
    <location>
        <position position="1315"/>
    </location>
</feature>
<feature type="sequence variant" id="VAR_008029" description="In dbSNP:rs45517323." evidence="11">
    <original>R</original>
    <variation>H</variation>
    <location>
        <position position="1329"/>
    </location>
</feature>
<feature type="sequence variant" id="VAR_022920" description="In dbSNP:rs45462593." evidence="25">
    <original>S</original>
    <variation>R</variation>
    <location>
        <position position="1341"/>
    </location>
</feature>
<feature type="sequence variant" id="VAR_018601" description="In dbSNP:rs45474795." evidence="22">
    <original>A</original>
    <variation>S</variation>
    <location>
        <position position="1429"/>
    </location>
</feature>
<feature type="sequence variant" id="VAR_018602" description="In dbSNP:rs45517338." evidence="22">
    <original>P</original>
    <variation>R</variation>
    <location>
        <position position="1450"/>
    </location>
</feature>
<feature type="sequence variant" id="VAR_009445" description="In TSC2; dbSNP:rs45497997." evidence="6">
    <original>P</original>
    <variation>R</variation>
    <location>
        <position position="1497"/>
    </location>
</feature>
<feature type="sequence variant" id="VAR_009446" description="In TSC2; dbSNP:rs137854879." evidence="6">
    <original>S</original>
    <variation>N</variation>
    <location>
        <position position="1498"/>
    </location>
</feature>
<feature type="sequence variant" id="VAR_005660" description="In TSC2; uncertain significance." evidence="48 50">
    <location>
        <position position="1509"/>
    </location>
</feature>
<feature type="sequence variant" id="VAR_078847" description="In FCORD2; somatic mutation; decreased function in negative regulation of TOR signaling; does not affect interaction with TSC1; dbSNP:rs745895675." evidence="39">
    <original>V</original>
    <variation>I</variation>
    <location>
        <position position="1547"/>
    </location>
</feature>
<feature type="sequence variant" id="VAR_005661" description="In TSC2; dbSNP:rs45517355." evidence="51">
    <original>Y</original>
    <variation>C</variation>
    <location>
        <position position="1549"/>
    </location>
</feature>
<feature type="sequence variant" id="VAR_009447" description="In TSC2; uncertain significance; dbSNP:rs45511204." evidence="6 50">
    <original>L</original>
    <variation>M</variation>
    <location>
        <position position="1594"/>
    </location>
</feature>
<feature type="sequence variant" id="VAR_005662" description="In TSC2.">
    <location>
        <position position="1614"/>
    </location>
</feature>
<feature type="sequence variant" id="VAR_009448" description="In TSC2; dbSNP:rs45446901." evidence="7">
    <original>H</original>
    <variation>Y</variation>
    <location>
        <position position="1620"/>
    </location>
</feature>
<feature type="sequence variant" id="VAR_022921" description="In dbSNP:rs45482398." evidence="25">
    <original>D</original>
    <variation>N</variation>
    <location>
        <position position="1636"/>
    </location>
</feature>
<feature type="sequence variant" id="VAR_005663" description="In TSC2; dbSNP:rs45517380." evidence="51">
    <original>N</original>
    <variation>I</variation>
    <location>
        <position position="1643"/>
    </location>
</feature>
<feature type="sequence variant" id="VAR_009449" description="In TSC2; Abolishes GAP activity; dbSNP:rs45517381." evidence="6 18 23 50">
    <original>N</original>
    <variation>K</variation>
    <location>
        <position position="1643"/>
    </location>
</feature>
<feature type="sequence variant" id="VAR_005664" description="In TSC2; dbSNP:rs45501091." evidence="53">
    <original>Y</original>
    <variation>C</variation>
    <location>
        <position position="1650"/>
    </location>
</feature>
<feature type="sequence variant" id="VAR_009450" description="In TSC2; greatly reduces the ability to enhance the RHEB GTPase activity; dbSNP:rs45517382." evidence="6 17 22 23 50">
    <original>N</original>
    <variation>S</variation>
    <location>
        <position position="1651"/>
    </location>
</feature>
<feature type="sequence variant" id="VAR_018603" description="In TSC2; dbSNP:rs45517383." evidence="22">
    <original>S</original>
    <variation>F</variation>
    <location>
        <position position="1653"/>
    </location>
</feature>
<feature type="sequence variant" id="VAR_022922" description="In dbSNP:rs45490993." evidence="25">
    <original>V</original>
    <variation>L</variation>
    <location>
        <position position="1673"/>
    </location>
</feature>
<feature type="sequence variant" id="VAR_009451" description="In TSC2; dbSNP:rs45483392." evidence="6 7 8 22 50">
    <original>P</original>
    <variation>L</variation>
    <location>
        <position position="1675"/>
    </location>
</feature>
<feature type="sequence variant" id="VAR_009452" description="In TSC2; Abolishes GAP activity; dbSNP:rs45476793." evidence="6 23 50">
    <original>N</original>
    <variation>K</variation>
    <location>
        <position position="1681"/>
    </location>
</feature>
<feature type="sequence variant" id="VAR_005665" description="In TSC2; dbSNP:rs137854882." evidence="53">
    <original>D</original>
    <variation>Y</variation>
    <location>
        <position position="1690"/>
    </location>
</feature>
<feature type="sequence variant" id="VAR_009453" description="In TSC2; dbSNP:rs45474691." evidence="7">
    <original>S</original>
    <variation>T</variation>
    <location>
        <position position="1704"/>
    </location>
</feature>
<feature type="sequence variant" id="VAR_008030" description="In TSC2; dbSNP:rs45517393." evidence="11">
    <original>P</original>
    <variation>L</variation>
    <location>
        <position position="1709"/>
    </location>
</feature>
<feature type="sequence variant" id="VAR_005666" description="In TSC2." evidence="48">
    <original>A</original>
    <variation>E</variation>
    <location>
        <position position="1712"/>
    </location>
</feature>
<feature type="sequence variant" id="VAR_009454" description="In TSC2; Abolishes GAP activity; dbSNP:rs45507199." evidence="6 23">
    <original>R</original>
    <variation>P</variation>
    <location>
        <position position="1743"/>
    </location>
</feature>
<feature type="sequence variant" id="VAR_008031" description="In TSC2; dbSNP:rs45507199." evidence="11">
    <original>R</original>
    <variation>Q</variation>
    <location>
        <position position="1743"/>
    </location>
</feature>
<feature type="sequence variant" id="VAR_009455" description="In TSC2; dbSNP:rs45517413." evidence="10">
    <original>L</original>
    <variation>P</variation>
    <location>
        <position position="1744"/>
    </location>
</feature>
<feature type="sequence variant" id="VAR_009456" description="In TSC2." evidence="10 22">
    <location>
        <begin position="1746"/>
        <end position="1751"/>
    </location>
</feature>
<feature type="sequence variant" id="VAR_005667" description="In TSC2; dbSNP:rs45459299." evidence="51">
    <original>L</original>
    <variation>F</variation>
    <location>
        <position position="1750"/>
    </location>
</feature>
<feature type="sequence variant" id="VAR_008032" description="In TSC2; dbSNP:rs45517418." evidence="11">
    <original>H</original>
    <variation>P</variation>
    <location>
        <position position="1773"/>
    </location>
</feature>
<feature type="sequence variant" id="VAR_057015" description="In dbSNP:rs9209.">
    <original>S</original>
    <variation>T</variation>
    <location>
        <position position="1774"/>
    </location>
</feature>
<feature type="sequence variant" id="VAR_008033" description="In TSC2; dbSNP:rs777166275." evidence="11">
    <original>E</original>
    <variation>Q</variation>
    <location>
        <position position="1783"/>
    </location>
</feature>
<feature type="sequence variant" id="VAR_009457" description="In dbSNP:rs45517419.">
    <original>G</original>
    <variation>S</variation>
    <location>
        <position position="1787"/>
    </location>
</feature>
<feature type="sequence variant" id="VAR_009458" description="In dbSNP:rs45517421.">
    <original>G</original>
    <variation>S</variation>
    <location>
        <position position="1791"/>
    </location>
</feature>
<feature type="mutagenesis site" description="Inhibits insulin-stimulated phosphorylation and activation of RPS6KB1; when associated with A-1462." evidence="15">
    <original>S</original>
    <variation>A</variation>
    <location>
        <position position="939"/>
    </location>
</feature>
<feature type="mutagenesis site" description="Abolishes AMPK-mediated phosphorylation; when associated with A-1387." evidence="21">
    <original>T</original>
    <variation>A</variation>
    <location>
        <position position="1271"/>
    </location>
</feature>
<feature type="mutagenesis site" description="Abolishes AMPK-mediated phosphorylation; when associated with A-1271." evidence="21">
    <original>S</original>
    <variation>A</variation>
    <location>
        <position position="1387"/>
    </location>
</feature>
<feature type="mutagenesis site" description="Inhibits insulin-stimulated phosphorylation and activation of RPS6KB1; when associated with A-939." evidence="15">
    <original>T</original>
    <variation>A</variation>
    <location>
        <position position="1462"/>
    </location>
</feature>
<feature type="mutagenesis site" description="Decreased GTPase-activating protein activity." evidence="43">
    <original>R</original>
    <variation>A</variation>
    <location>
        <position position="1529"/>
    </location>
</feature>
<feature type="mutagenesis site" description="Decreased GTPase-activating protein activity." evidence="43">
    <original>L</original>
    <variation>A</variation>
    <location>
        <position position="1533"/>
    </location>
</feature>
<feature type="mutagenesis site" description="Decreased GTPase-activating protein activity." evidence="43">
    <original>L</original>
    <variation>A</variation>
    <location>
        <position position="1594"/>
    </location>
</feature>
<feature type="mutagenesis site" description="Abolishes GAP activity." evidence="23">
    <original>KKR</original>
    <variation>QQQ</variation>
    <location>
        <begin position="1637"/>
        <end position="1639"/>
    </location>
</feature>
<feature type="mutagenesis site" description="Decreased GTPase-activating protein activity." evidence="43">
    <original>K</original>
    <variation>A</variation>
    <location>
        <position position="1638"/>
    </location>
</feature>
<feature type="mutagenesis site" description="Decreased GTPase-activating protein activity." evidence="43">
    <original>R</original>
    <variation>A</variation>
    <location>
        <position position="1639"/>
    </location>
</feature>
<feature type="mutagenesis site" description="Decreased GTPase-activating protein activity." evidence="43">
    <original>F</original>
    <variation>A</variation>
    <location>
        <position position="1666"/>
    </location>
</feature>
<feature type="mutagenesis site" description="Abolishes GAP activity." evidence="23">
    <original>R</original>
    <variation>Q</variation>
    <location>
        <position position="1745"/>
    </location>
</feature>
<feature type="mutagenesis site" description="No effect." evidence="23">
    <original>RLR</original>
    <variation>QLQ</variation>
    <location>
        <begin position="1749"/>
        <end position="1751"/>
    </location>
</feature>
<feature type="mutagenesis site" description="Decreased GTPase-activating protein activity." evidence="43">
    <original>R</original>
    <variation>A</variation>
    <location>
        <position position="1749"/>
    </location>
</feature>
<feature type="sequence conflict" description="In Ref. 7; BAG61344." evidence="60" ref="7">
    <original>N</original>
    <variation>S</variation>
    <location>
        <position position="187"/>
    </location>
</feature>
<feature type="sequence conflict" description="In Ref. 10; AAI50301." evidence="60" ref="10">
    <original>A</original>
    <variation>V</variation>
    <location>
        <position position="210"/>
    </location>
</feature>
<feature type="sequence conflict" description="In Ref. 7; BAG61344." evidence="60" ref="7">
    <original>S</original>
    <variation>P</variation>
    <location>
        <position position="335"/>
    </location>
</feature>
<feature type="sequence conflict" description="In Ref. 7; BAG58569." evidence="60" ref="7">
    <original>E</original>
    <variation>V</variation>
    <location>
        <position position="392"/>
    </location>
</feature>
<feature type="sequence conflict" description="In Ref. 7; BAG58569." evidence="60" ref="7">
    <original>S</original>
    <variation>P</variation>
    <location>
        <position position="422"/>
    </location>
</feature>
<feature type="sequence conflict" description="In Ref. 7; BAG61344." evidence="60" ref="7">
    <original>S</original>
    <variation>N</variation>
    <location>
        <position position="660"/>
    </location>
</feature>
<feature type="sequence conflict" description="In Ref. 10; AAI50301." evidence="60" ref="10">
    <original>K</original>
    <variation>E</variation>
    <location>
        <position position="704"/>
    </location>
</feature>
<feature type="sequence conflict" description="In Ref. 7; BAG58569." evidence="60" ref="7">
    <original>L</original>
    <variation>P</variation>
    <location>
        <position position="706"/>
    </location>
</feature>
<feature type="sequence conflict" description="In Ref. 10; AAI50301." evidence="60" ref="10">
    <original>L</original>
    <variation>M</variation>
    <location>
        <position position="1015"/>
    </location>
</feature>
<feature type="sequence conflict" description="In Ref. 7; BAG61344." evidence="60" ref="7">
    <original>E</original>
    <variation>V</variation>
    <location>
        <position position="1239"/>
    </location>
</feature>
<feature type="sequence conflict" description="In Ref. 7; BAG61344." evidence="60" ref="7">
    <original>L</original>
    <variation>V</variation>
    <location>
        <position position="1398"/>
    </location>
</feature>
<feature type="sequence conflict" description="In Ref. 10; AAI50301." evidence="60" ref="10">
    <original>I</original>
    <variation>M</variation>
    <location>
        <position position="1672"/>
    </location>
</feature>
<feature type="sequence conflict" description="In Ref. 7; BAG61344." evidence="60" ref="7">
    <original>V</original>
    <variation>A</variation>
    <location>
        <position position="1807"/>
    </location>
</feature>
<feature type="helix" evidence="69">
    <location>
        <begin position="42"/>
        <end position="48"/>
    </location>
</feature>
<feature type="helix" evidence="69">
    <location>
        <begin position="54"/>
        <end position="70"/>
    </location>
</feature>
<feature type="helix" evidence="69">
    <location>
        <begin position="75"/>
        <end position="86"/>
    </location>
</feature>
<feature type="helix" evidence="69">
    <location>
        <begin position="95"/>
        <end position="112"/>
    </location>
</feature>
<feature type="helix" evidence="69">
    <location>
        <begin position="113"/>
        <end position="115"/>
    </location>
</feature>
<feature type="helix" evidence="69">
    <location>
        <begin position="119"/>
        <end position="128"/>
    </location>
</feature>
<feature type="strand" evidence="69">
    <location>
        <begin position="131"/>
        <end position="133"/>
    </location>
</feature>
<feature type="helix" evidence="69">
    <location>
        <begin position="136"/>
        <end position="147"/>
    </location>
</feature>
<feature type="helix" evidence="69">
    <location>
        <begin position="148"/>
        <end position="150"/>
    </location>
</feature>
<feature type="turn" evidence="69">
    <location>
        <begin position="154"/>
        <end position="159"/>
    </location>
</feature>
<feature type="helix" evidence="69">
    <location>
        <begin position="160"/>
        <end position="170"/>
    </location>
</feature>
<feature type="helix" evidence="69">
    <location>
        <begin position="174"/>
        <end position="186"/>
    </location>
</feature>
<feature type="helix" evidence="69">
    <location>
        <begin position="189"/>
        <end position="194"/>
    </location>
</feature>
<feature type="helix" evidence="69">
    <location>
        <begin position="195"/>
        <end position="208"/>
    </location>
</feature>
<feature type="helix" evidence="69">
    <location>
        <begin position="212"/>
        <end position="228"/>
    </location>
</feature>
<feature type="helix" evidence="69">
    <location>
        <begin position="233"/>
        <end position="235"/>
    </location>
</feature>
<feature type="helix" evidence="69">
    <location>
        <begin position="236"/>
        <end position="246"/>
    </location>
</feature>
<feature type="helix" evidence="69">
    <location>
        <begin position="250"/>
        <end position="252"/>
    </location>
</feature>
<feature type="helix" evidence="69">
    <location>
        <begin position="253"/>
        <end position="264"/>
    </location>
</feature>
<feature type="helix" evidence="69">
    <location>
        <begin position="269"/>
        <end position="281"/>
    </location>
</feature>
<feature type="helix" evidence="69">
    <location>
        <begin position="283"/>
        <end position="285"/>
    </location>
</feature>
<feature type="helix" evidence="69">
    <location>
        <begin position="289"/>
        <end position="304"/>
    </location>
</feature>
<feature type="helix" evidence="69">
    <location>
        <begin position="316"/>
        <end position="318"/>
    </location>
</feature>
<feature type="helix" evidence="69">
    <location>
        <begin position="320"/>
        <end position="326"/>
    </location>
</feature>
<feature type="helix" evidence="69">
    <location>
        <begin position="332"/>
        <end position="349"/>
    </location>
</feature>
<feature type="turn" evidence="69">
    <location>
        <begin position="350"/>
        <end position="352"/>
    </location>
</feature>
<feature type="helix" evidence="69">
    <location>
        <begin position="355"/>
        <end position="371"/>
    </location>
</feature>
<feature type="turn" evidence="69">
    <location>
        <begin position="372"/>
        <end position="374"/>
    </location>
</feature>
<feature type="helix" evidence="69">
    <location>
        <begin position="378"/>
        <end position="396"/>
    </location>
</feature>
<feature type="helix" evidence="69">
    <location>
        <begin position="404"/>
        <end position="413"/>
    </location>
</feature>
<feature type="helix" evidence="69">
    <location>
        <begin position="414"/>
        <end position="417"/>
    </location>
</feature>
<feature type="helix" evidence="69">
    <location>
        <begin position="420"/>
        <end position="432"/>
    </location>
</feature>
<feature type="helix" evidence="69">
    <location>
        <begin position="441"/>
        <end position="453"/>
    </location>
</feature>
<feature type="helix" evidence="69">
    <location>
        <begin position="459"/>
        <end position="476"/>
    </location>
</feature>
<feature type="turn" evidence="69">
    <location>
        <begin position="477"/>
        <end position="479"/>
    </location>
</feature>
<feature type="helix" evidence="69">
    <location>
        <begin position="481"/>
        <end position="487"/>
    </location>
</feature>
<feature type="helix" evidence="69">
    <location>
        <begin position="489"/>
        <end position="493"/>
    </location>
</feature>
<feature type="helix" evidence="69">
    <location>
        <begin position="494"/>
        <end position="498"/>
    </location>
</feature>
<feature type="helix" evidence="69">
    <location>
        <begin position="502"/>
        <end position="518"/>
    </location>
</feature>
<feature type="helix" evidence="69">
    <location>
        <begin position="524"/>
        <end position="535"/>
    </location>
</feature>
<feature type="helix" evidence="69">
    <location>
        <begin position="549"/>
        <end position="554"/>
    </location>
</feature>
<feature type="helix" evidence="69">
    <location>
        <begin position="555"/>
        <end position="557"/>
    </location>
</feature>
<feature type="helix" evidence="69">
    <location>
        <begin position="558"/>
        <end position="574"/>
    </location>
</feature>
<feature type="strand" evidence="69">
    <location>
        <begin position="577"/>
        <end position="579"/>
    </location>
</feature>
<feature type="helix" evidence="69">
    <location>
        <begin position="581"/>
        <end position="600"/>
    </location>
</feature>
<feature type="helix" evidence="69">
    <location>
        <begin position="605"/>
        <end position="618"/>
    </location>
</feature>
<feature type="strand" evidence="69">
    <location>
        <begin position="627"/>
        <end position="632"/>
    </location>
</feature>
<feature type="strand" evidence="69">
    <location>
        <begin position="638"/>
        <end position="645"/>
    </location>
</feature>
<feature type="helix" evidence="69">
    <location>
        <begin position="687"/>
        <end position="699"/>
    </location>
</feature>
<feature type="helix" evidence="69">
    <location>
        <begin position="703"/>
        <end position="717"/>
    </location>
</feature>
<feature type="helix" evidence="69">
    <location>
        <begin position="720"/>
        <end position="725"/>
    </location>
</feature>
<feature type="helix" evidence="69">
    <location>
        <begin position="730"/>
        <end position="742"/>
    </location>
</feature>
<feature type="helix" evidence="69">
    <location>
        <begin position="745"/>
        <end position="749"/>
    </location>
</feature>
<feature type="helix" evidence="69">
    <location>
        <begin position="759"/>
        <end position="773"/>
    </location>
</feature>
<feature type="helix" evidence="69">
    <location>
        <begin position="774"/>
        <end position="779"/>
    </location>
</feature>
<feature type="helix" evidence="69">
    <location>
        <begin position="782"/>
        <end position="794"/>
    </location>
</feature>
<feature type="helix" evidence="69">
    <location>
        <begin position="795"/>
        <end position="797"/>
    </location>
</feature>
<feature type="helix" evidence="69">
    <location>
        <begin position="801"/>
        <end position="814"/>
    </location>
</feature>
<feature type="helix" evidence="69">
    <location>
        <begin position="816"/>
        <end position="831"/>
    </location>
</feature>
<feature type="helix" evidence="69">
    <location>
        <begin position="837"/>
        <end position="851"/>
    </location>
</feature>
<feature type="turn" evidence="69">
    <location>
        <begin position="854"/>
        <end position="856"/>
    </location>
</feature>
<feature type="helix" evidence="69">
    <location>
        <begin position="862"/>
        <end position="872"/>
    </location>
</feature>
<feature type="helix" evidence="69">
    <location>
        <begin position="873"/>
        <end position="876"/>
    </location>
</feature>
<feature type="turn" evidence="69">
    <location>
        <begin position="878"/>
        <end position="880"/>
    </location>
</feature>
<feature type="helix" evidence="69">
    <location>
        <begin position="883"/>
        <end position="899"/>
    </location>
</feature>
<feature type="helix" evidence="69">
    <location>
        <begin position="902"/>
        <end position="905"/>
    </location>
</feature>
<feature type="helix" evidence="69">
    <location>
        <begin position="908"/>
        <end position="921"/>
    </location>
</feature>
<feature type="strand" evidence="69">
    <location>
        <begin position="925"/>
        <end position="927"/>
    </location>
</feature>
<feature type="helix" evidence="69">
    <location>
        <begin position="934"/>
        <end position="936"/>
    </location>
</feature>
<feature type="helix" evidence="69">
    <location>
        <begin position="1005"/>
        <end position="1033"/>
    </location>
</feature>
<feature type="helix" evidence="69">
    <location>
        <begin position="1046"/>
        <end position="1052"/>
    </location>
</feature>
<feature type="strand" evidence="69">
    <location>
        <begin position="1056"/>
        <end position="1061"/>
    </location>
</feature>
<feature type="strand" evidence="69">
    <location>
        <begin position="1066"/>
        <end position="1071"/>
    </location>
</feature>
<feature type="helix" evidence="69">
    <location>
        <begin position="1077"/>
        <end position="1081"/>
    </location>
</feature>
<feature type="turn" evidence="69">
    <location>
        <begin position="1183"/>
        <end position="1185"/>
    </location>
</feature>
<feature type="helix" evidence="69">
    <location>
        <begin position="1186"/>
        <end position="1191"/>
    </location>
</feature>
<feature type="strand" evidence="69">
    <location>
        <begin position="1194"/>
        <end position="1201"/>
    </location>
</feature>
<feature type="strand" evidence="69">
    <location>
        <begin position="1204"/>
        <end position="1213"/>
    </location>
</feature>
<feature type="turn" evidence="69">
    <location>
        <begin position="1218"/>
        <end position="1220"/>
    </location>
</feature>
<feature type="helix" evidence="69">
    <location>
        <begin position="1229"/>
        <end position="1232"/>
    </location>
</feature>
<feature type="turn" evidence="69">
    <location>
        <begin position="1233"/>
        <end position="1235"/>
    </location>
</feature>
<feature type="helix" evidence="69">
    <location>
        <begin position="1236"/>
        <end position="1238"/>
    </location>
</feature>
<feature type="helix" evidence="69">
    <location>
        <begin position="1497"/>
        <end position="1505"/>
    </location>
</feature>
<feature type="turn" evidence="69">
    <location>
        <begin position="1512"/>
        <end position="1515"/>
    </location>
</feature>
<feature type="helix" evidence="69">
    <location>
        <begin position="1525"/>
        <end position="1536"/>
    </location>
</feature>
<feature type="strand" evidence="69">
    <location>
        <begin position="1539"/>
        <end position="1550"/>
    </location>
</feature>
<feature type="helix" evidence="69">
    <location>
        <begin position="1558"/>
        <end position="1563"/>
    </location>
</feature>
<feature type="helix" evidence="69">
    <location>
        <begin position="1569"/>
        <end position="1576"/>
    </location>
</feature>
<feature type="strand" evidence="69">
    <location>
        <begin position="1578"/>
        <end position="1583"/>
    </location>
</feature>
<feature type="helix" evidence="69">
    <location>
        <begin position="1584"/>
        <end position="1586"/>
    </location>
</feature>
<feature type="turn" evidence="69">
    <location>
        <begin position="1589"/>
        <end position="1591"/>
    </location>
</feature>
<feature type="strand" evidence="69">
    <location>
        <begin position="1605"/>
        <end position="1611"/>
    </location>
</feature>
<feature type="strand" evidence="69">
    <location>
        <begin position="1613"/>
        <end position="1621"/>
    </location>
</feature>
<feature type="helix" evidence="69">
    <location>
        <begin position="1622"/>
        <end position="1624"/>
    </location>
</feature>
<feature type="helix" evidence="69">
    <location>
        <begin position="1635"/>
        <end position="1641"/>
    </location>
</feature>
<feature type="strand" evidence="69">
    <location>
        <begin position="1644"/>
        <end position="1651"/>
    </location>
</feature>
<feature type="strand" evidence="69">
    <location>
        <begin position="1653"/>
        <end position="1655"/>
    </location>
</feature>
<feature type="strand" evidence="69">
    <location>
        <begin position="1669"/>
        <end position="1676"/>
    </location>
</feature>
<feature type="turn" evidence="69">
    <location>
        <begin position="1677"/>
        <end position="1679"/>
    </location>
</feature>
<feature type="strand" evidence="69">
    <location>
        <begin position="1680"/>
        <end position="1687"/>
    </location>
</feature>
<feature type="helix" evidence="69">
    <location>
        <begin position="1691"/>
        <end position="1693"/>
    </location>
</feature>
<feature type="strand" evidence="69">
    <location>
        <begin position="1700"/>
        <end position="1704"/>
    </location>
</feature>
<feature type="turn" evidence="69">
    <location>
        <begin position="1705"/>
        <end position="1707"/>
    </location>
</feature>
<feature type="helix" evidence="69">
    <location>
        <begin position="1708"/>
        <end position="1730"/>
    </location>
</feature>
<feature type="helix" evidence="69">
    <location>
        <begin position="1739"/>
        <end position="1760"/>
    </location>
</feature>
<protein>
    <recommendedName>
        <fullName evidence="58">Tuberin</fullName>
    </recommendedName>
    <alternativeName>
        <fullName evidence="57">Tuberous sclerosis 2 protein</fullName>
    </alternativeName>
</protein>
<comment type="function">
    <text evidence="1 16 17 18 19 20 23 34 35 39 43 45">Catalytic component of the TSC-TBC complex, a multiprotein complex that acts as a negative regulator of the canonical mTORC1 complex, an evolutionarily conserved central nutrient sensor that stimulates anabolic reactions and macromolecule biosynthesis to promote cellular biomass generation and growth (PubMed:12172553, PubMed:12271141, PubMed:12842888, PubMed:12906785, PubMed:15340059, PubMed:22819219, PubMed:24529379, PubMed:28215400, PubMed:33436626, PubMed:35772404). Within the TSC-TBC complex, TSC2 acts as a GTPase-activating protein (GAP) for the small GTPase RHEB, a direct activator of the protein kinase activity of mTORC1 (PubMed:12172553, PubMed:12820960, PubMed:12842888, PubMed:12906785, PubMed:15340059, PubMed:22819219, PubMed:24529379, PubMed:33436626). In absence of nutrients, the TSC-TBC complex inhibits mTORC1, thereby preventing phosphorylation of ribosomal protein S6 kinase (RPS6KB1 and RPS6KB2) and EIF4EBP1 (4E-BP1) by the mTORC1 signaling (PubMed:12172553, PubMed:12271141, PubMed:12842888, PubMed:12906785, PubMed:22819219, PubMed:24529379, PubMed:28215400, PubMed:35772404). The TSC-TBC complex is inactivated in response to nutrients, relieving inhibition of mTORC1 (PubMed:12172553, PubMed:24529379). Involved in microtubule-mediated protein transport via its ability to regulate mTORC1 signaling (By similarity). Also stimulates the intrinsic GTPase activity of the Ras-related proteins RAP1A and RAB5 (By similarity).</text>
</comment>
<comment type="subunit">
    <text evidence="9 16 19 20 26 27 32 33 35 36 37 39 40 41 42 43 44 49 52">Component of the TSC-TBC complex (also named Rhebulator complex), composed of 2 molecules of TSC1, 2 molecules of TSC2 and 1 molecule of TBC1D7 (PubMed:10585443, PubMed:12172553, PubMed:12842888, PubMed:12906785, PubMed:15963462, PubMed:22795129, PubMed:24529379, PubMed:28215400, PubMed:33436626, PubMed:9580671). Probably forms a complex composed of chaperones HSP90 and HSP70, co-chaperones STIP1/HOP, CDC37, PPP5C, PTGES3/p23, TSC1 and client protein TSC2 (PubMed:29127155). Probably forms a complex composed of chaperones HSP90 and HSP70, co-chaperones CDC37, PPP5C, TSC1 and client protein TSC2, CDK4, AKT, RAF1 and NR3C1; this complex does not contain co-chaperones STIP1/HOP and PTGES3/p23 (PubMed:29127155). Forms a complex containing HSP90AA1, TSC1 and TSC2; TSC1 is required to recruit TCS2 to the complex thereby stabilizing TSC2 (PubMed:29127155). Interacts with TSC1 and HERC1; the interaction with TSC1 stabilizes TSC2 and prevents the interaction with HERC1 (PubMed:16464865). May also interact with the adapter molecule RABEP1 (PubMed:9045618). The final complex may contain TSC2 and RABEP1 linked to RAB5 (PubMed:9045618). Interacts with HSPA1 and HSPA8 (PubMed:15963462). Interacts with NAA10 (via C-terminal domain) (PubMed:20145209). Interacts with RRAGA (polyubiquitinated) (PubMed:25936802). Interacts with WDR45B (PubMed:28561066). Interacts with RPAP3 and URI1 (PubMed:28561026). Interacts with YWHAG (PubMed:33473107). Interacts with RHEB (PubMed:25816988).</text>
</comment>
<comment type="subunit">
    <text evidence="30">(Microbial infection) Interacts with human cytomegalovirus protein UL38; this interaction inhibits cellular stress response mediated by mTORC1.</text>
</comment>
<comment type="interaction">
    <interactant intactId="EBI-396587">
        <id>P49815</id>
    </interactant>
    <interactant intactId="EBI-79165">
        <id>Q9NRD5</id>
        <label>PICK1</label>
    </interactant>
    <organismsDiffer>false</organismsDiffer>
    <experiments>2</experiments>
</comment>
<comment type="interaction">
    <interactant intactId="EBI-396587">
        <id>P49815</id>
    </interactant>
    <interactant intactId="EBI-357253">
        <id>P62136</id>
        <label>PPP1CA</label>
    </interactant>
    <organismsDiffer>false</organismsDiffer>
    <experiments>2</experiments>
</comment>
<comment type="interaction">
    <interactant intactId="EBI-396587">
        <id>P49815</id>
    </interactant>
    <interactant intactId="EBI-1042854">
        <id>O00141</id>
        <label>SGK1</label>
    </interactant>
    <organismsDiffer>false</organismsDiffer>
    <experiments>4</experiments>
</comment>
<comment type="interaction">
    <interactant intactId="EBI-396587">
        <id>P49815</id>
    </interactant>
    <interactant intactId="EBI-1802965">
        <id>Q96EB6</id>
        <label>SIRT1</label>
    </interactant>
    <organismsDiffer>false</organismsDiffer>
    <experiments>2</experiments>
</comment>
<comment type="interaction">
    <interactant intactId="EBI-396587">
        <id>P49815</id>
    </interactant>
    <interactant intactId="EBI-1047085">
        <id>Q92574</id>
        <label>TSC1</label>
    </interactant>
    <organismsDiffer>false</organismsDiffer>
    <experiments>13</experiments>
</comment>
<comment type="interaction">
    <interactant intactId="EBI-396587">
        <id>P49815</id>
    </interactant>
    <interactant intactId="EBI-359815">
        <id>P31946</id>
        <label>YWHAB</label>
    </interactant>
    <organismsDiffer>false</organismsDiffer>
    <experiments>8</experiments>
</comment>
<comment type="interaction">
    <interactant intactId="EBI-396587">
        <id>P49815</id>
    </interactant>
    <interactant intactId="EBI-347088">
        <id>P63104</id>
        <label>YWHAZ</label>
    </interactant>
    <organismsDiffer>false</organismsDiffer>
    <experiments>9</experiments>
</comment>
<comment type="subcellular location">
    <subcellularLocation>
        <location evidence="35 36">Lysosome membrane</location>
        <topology evidence="35">Peripheral membrane protein</topology>
    </subcellularLocation>
    <subcellularLocation>
        <location evidence="9 35">Cytoplasm</location>
        <location evidence="9 35">Cytosol</location>
    </subcellularLocation>
    <text evidence="35">Recruited to lysosomal membranes in a RHEB-dependent process in absence of nutrients (PubMed:24529379). In response to insulin signaling and phosphorylation by PKB/AKT1, the complex dissociates from lysosomal membranes and relocalizes to the cytosol (PubMed:24529379).</text>
</comment>
<comment type="alternative products">
    <event type="alternative splicing"/>
    <isoform>
        <id>P49815-1</id>
        <name>1</name>
        <sequence type="displayed"/>
    </isoform>
    <isoform>
        <id>P49815-2</id>
        <name>2</name>
        <sequence type="described" ref="VSP_004470"/>
    </isoform>
    <isoform>
        <id>P49815-3</id>
        <name>3</name>
        <sequence type="described" ref="VSP_004471"/>
    </isoform>
    <isoform>
        <id>P49815-4</id>
        <name>4</name>
        <sequence type="described" ref="VSP_004472"/>
    </isoform>
    <isoform>
        <id>P49815-5</id>
        <name>5</name>
        <sequence type="described" ref="VSP_004471 VSP_004472"/>
    </isoform>
    <isoform>
        <id>P49815-6</id>
        <name>6</name>
        <sequence type="described" ref="VSP_038355 VSP_004470 VSP_004472"/>
    </isoform>
    <isoform>
        <id>P49815-7</id>
        <name>7</name>
        <sequence type="described" ref="VSP_054163 VSP_004470 VSP_004472"/>
    </isoform>
    <isoform>
        <id>P49815-8</id>
        <name>8</name>
        <name>H</name>
        <name>I</name>
        <sequence type="described" ref="VSP_055896 VSP_055897"/>
    </isoform>
</comment>
<comment type="tissue specificity">
    <text evidence="46">Liver, brain, heart, lymphocytes, fibroblasts, biliary epithelium, pancreas, skeletal muscle, kidney, lung and placenta.</text>
</comment>
<comment type="PTM">
    <text evidence="15 16 21 24 26 31 35">Phosphorylation at Ser-939 and Thr-1462 by PKB/AKT1 in response to insulin signaling and growth factor stimulation inhibits the ability of the TSC-TBC complex to suppress mTORC1 signaling: phosphorylation promotes dissociation of the TSC-TBC complex from lysosomal membranes, leading to activation of mTORC1 by RHEB (PubMed:12150915, PubMed:12172553, PubMed:24529379). Phosphorylation at Ser-1387, Ser-1418 or Ser-1420 does not affect interaction with TSC1 (PubMed:15963462). Phosphorylation by AMPK activates it and leads to negative regulation of the mTORC1 complex (PubMed:14651849). Phosphorylated at Ser-1798 by RPS6KA1; phosphorylation inhibits TSC2 ability to suppress mTORC1 signaling (PubMed:15342917). Phosphorylated by DAPK1 (PubMed:18974095).</text>
</comment>
<comment type="PTM">
    <text evidence="28 29 38">Ubiquitinated by the DCX(FBXW5) E3 ubiquitin-protein ligase complex, leading to its subsequent degradation (PubMed:18381890, PubMed:27278822). Ubiquitinated by MYCBP2 independently of its phosphorylation status leading to subsequent degradation; association with TSC1 protects from ubiquitination (PubMed:18308511).</text>
</comment>
<comment type="disease" evidence="5 6 7 8 10 11 12 17 18 22 23 25 26 48 50 51 53">
    <disease id="DI-02846">
        <name>Tuberous sclerosis 2</name>
        <acronym>TSC2</acronym>
        <description>An autosomal dominant multi-system disorder that affects especially the brain, kidneys, heart, and skin. It is characterized by hamartomas (benign overgrowths predominantly of a cell or tissue type that occurs normally in the organ) and hamartias (developmental abnormalities of tissue combination). Clinical manifestations include epilepsy, learning difficulties, behavioral problems, and skin lesions. Seizures can be intractable and premature death can occur from a variety of disease-associated causes.</description>
        <dbReference type="MIM" id="613254"/>
    </disease>
    <text>The disease is caused by variants affecting the gene represented in this entry.</text>
</comment>
<comment type="disease" evidence="13 14">
    <disease id="DI-01919">
        <name>Lymphangioleiomyomatosis</name>
        <acronym>LAM</acronym>
        <description>Progressive and often fatal lung disease characterized by a diffuse proliferation of abnormal smooth muscle cells in the lungs. It affects almost exclusively young women and can occur as an isolated disorder or in association with tuberous sclerosis complex.</description>
        <dbReference type="MIM" id="606690"/>
    </disease>
    <text>The disease is caused by variants affecting the gene represented in this entry.</text>
</comment>
<comment type="disease" evidence="39">
    <disease id="DI-04980">
        <name>Focal cortical dysplasia 2</name>
        <acronym>FCORD2</acronym>
        <description>A form of focal cortical dysplasia, a malformation of cortical development that results in medically refractory epilepsy in the pediatric population and in adults. FCORD2 is a severe form, with onset usually in childhood, characterized by disrupted cortical lamination and specific cytological abnormalities. It is classified in 2 subtypes: type IIA characterized by dysmorphic neurons and lack of balloon cells; type IIB with dysmorphic neurons and balloon cells.</description>
        <dbReference type="MIM" id="607341"/>
    </disease>
    <text>The disease is caused by variants affecting the gene represented in this entry.</text>
</comment>
<comment type="miscellaneous">
    <molecule>Isoform 8</molecule>
    <text evidence="60">May be due to an intron retention.</text>
</comment>
<comment type="sequence caution" evidence="60">
    <conflict type="erroneous initiation">
        <sequence resource="EMBL-CDS" id="BAE06082"/>
    </conflict>
    <text>Extended N-terminus.</text>
</comment>
<comment type="online information" name="Atlas of Genetics and Cytogenetics in Oncology and Haematology">
    <link uri="https://atlasgeneticsoncology.org/gene/184/TSC2"/>
</comment>
<comment type="online information" name="Tuberous sclerosis database Tuberous sclerosis 2 (TSC2)">
    <link uri="https://databases.lovd.nl/shared/genes/TSC2"/>
    <text>Leiden Open Variation Database (LOVD)</text>
</comment>
<name>TSC2_HUMAN</name>
<dbReference type="EMBL" id="X75621">
    <property type="protein sequence ID" value="CAA53287.1"/>
    <property type="molecule type" value="mRNA"/>
</dbReference>
<dbReference type="EMBL" id="L48546">
    <property type="protein sequence ID" value="AAB41564.1"/>
    <property type="molecule type" value="Genomic_DNA"/>
</dbReference>
<dbReference type="EMBL" id="L48517">
    <property type="protein sequence ID" value="AAB41564.1"/>
    <property type="status" value="JOINED"/>
    <property type="molecule type" value="Genomic_DNA"/>
</dbReference>
<dbReference type="EMBL" id="L48518">
    <property type="protein sequence ID" value="AAB41564.1"/>
    <property type="status" value="JOINED"/>
    <property type="molecule type" value="Genomic_DNA"/>
</dbReference>
<dbReference type="EMBL" id="L48519">
    <property type="protein sequence ID" value="AAB41564.1"/>
    <property type="status" value="JOINED"/>
    <property type="molecule type" value="Genomic_DNA"/>
</dbReference>
<dbReference type="EMBL" id="L48521">
    <property type="protein sequence ID" value="AAB41564.1"/>
    <property type="status" value="JOINED"/>
    <property type="molecule type" value="Genomic_DNA"/>
</dbReference>
<dbReference type="EMBL" id="L48522">
    <property type="protein sequence ID" value="AAB41564.1"/>
    <property type="status" value="JOINED"/>
    <property type="molecule type" value="Genomic_DNA"/>
</dbReference>
<dbReference type="EMBL" id="L48523">
    <property type="protein sequence ID" value="AAB41564.1"/>
    <property type="status" value="JOINED"/>
    <property type="molecule type" value="Genomic_DNA"/>
</dbReference>
<dbReference type="EMBL" id="L48524">
    <property type="protein sequence ID" value="AAB41564.1"/>
    <property type="status" value="JOINED"/>
    <property type="molecule type" value="Genomic_DNA"/>
</dbReference>
<dbReference type="EMBL" id="L48525">
    <property type="protein sequence ID" value="AAB41564.1"/>
    <property type="status" value="JOINED"/>
    <property type="molecule type" value="Genomic_DNA"/>
</dbReference>
<dbReference type="EMBL" id="L48526">
    <property type="protein sequence ID" value="AAB41564.1"/>
    <property type="status" value="JOINED"/>
    <property type="molecule type" value="Genomic_DNA"/>
</dbReference>
<dbReference type="EMBL" id="L48527">
    <property type="protein sequence ID" value="AAB41564.1"/>
    <property type="status" value="JOINED"/>
    <property type="molecule type" value="Genomic_DNA"/>
</dbReference>
<dbReference type="EMBL" id="L48528">
    <property type="protein sequence ID" value="AAB41564.1"/>
    <property type="status" value="JOINED"/>
    <property type="molecule type" value="Genomic_DNA"/>
</dbReference>
<dbReference type="EMBL" id="L48529">
    <property type="protein sequence ID" value="AAB41564.1"/>
    <property type="status" value="JOINED"/>
    <property type="molecule type" value="Genomic_DNA"/>
</dbReference>
<dbReference type="EMBL" id="L48530">
    <property type="protein sequence ID" value="AAB41564.1"/>
    <property type="status" value="JOINED"/>
    <property type="molecule type" value="Genomic_DNA"/>
</dbReference>
<dbReference type="EMBL" id="L48531">
    <property type="protein sequence ID" value="AAB41564.1"/>
    <property type="status" value="JOINED"/>
    <property type="molecule type" value="Genomic_DNA"/>
</dbReference>
<dbReference type="EMBL" id="L48532">
    <property type="protein sequence ID" value="AAB41564.1"/>
    <property type="status" value="JOINED"/>
    <property type="molecule type" value="Genomic_DNA"/>
</dbReference>
<dbReference type="EMBL" id="L48533">
    <property type="protein sequence ID" value="AAB41564.1"/>
    <property type="status" value="JOINED"/>
    <property type="molecule type" value="Genomic_DNA"/>
</dbReference>
<dbReference type="EMBL" id="L48534">
    <property type="protein sequence ID" value="AAB41564.1"/>
    <property type="status" value="JOINED"/>
    <property type="molecule type" value="Genomic_DNA"/>
</dbReference>
<dbReference type="EMBL" id="L48535">
    <property type="protein sequence ID" value="AAB41564.1"/>
    <property type="status" value="JOINED"/>
    <property type="molecule type" value="Genomic_DNA"/>
</dbReference>
<dbReference type="EMBL" id="L48536">
    <property type="protein sequence ID" value="AAB41564.1"/>
    <property type="status" value="JOINED"/>
    <property type="molecule type" value="Genomic_DNA"/>
</dbReference>
<dbReference type="EMBL" id="L48537">
    <property type="protein sequence ID" value="AAB41564.1"/>
    <property type="status" value="JOINED"/>
    <property type="molecule type" value="Genomic_DNA"/>
</dbReference>
<dbReference type="EMBL" id="L48538">
    <property type="protein sequence ID" value="AAB41564.1"/>
    <property type="status" value="JOINED"/>
    <property type="molecule type" value="Genomic_DNA"/>
</dbReference>
<dbReference type="EMBL" id="L48539">
    <property type="protein sequence ID" value="AAB41564.1"/>
    <property type="status" value="JOINED"/>
    <property type="molecule type" value="Genomic_DNA"/>
</dbReference>
<dbReference type="EMBL" id="L48540">
    <property type="protein sequence ID" value="AAB41564.1"/>
    <property type="status" value="JOINED"/>
    <property type="molecule type" value="Genomic_DNA"/>
</dbReference>
<dbReference type="EMBL" id="L48541">
    <property type="protein sequence ID" value="AAB41564.1"/>
    <property type="status" value="JOINED"/>
    <property type="molecule type" value="Genomic_DNA"/>
</dbReference>
<dbReference type="EMBL" id="L48542">
    <property type="protein sequence ID" value="AAB41564.1"/>
    <property type="status" value="JOINED"/>
    <property type="molecule type" value="Genomic_DNA"/>
</dbReference>
<dbReference type="EMBL" id="L48543">
    <property type="protein sequence ID" value="AAB41564.1"/>
    <property type="status" value="JOINED"/>
    <property type="molecule type" value="Genomic_DNA"/>
</dbReference>
<dbReference type="EMBL" id="L48544">
    <property type="protein sequence ID" value="AAB41564.1"/>
    <property type="status" value="JOINED"/>
    <property type="molecule type" value="Genomic_DNA"/>
</dbReference>
<dbReference type="EMBL" id="L48545">
    <property type="protein sequence ID" value="AAB41564.1"/>
    <property type="status" value="JOINED"/>
    <property type="molecule type" value="Genomic_DNA"/>
</dbReference>
<dbReference type="EMBL" id="KJ535038">
    <property type="protein sequence ID" value="AHW56677.1"/>
    <property type="molecule type" value="mRNA"/>
</dbReference>
<dbReference type="EMBL" id="KJ535051">
    <property type="protein sequence ID" value="AHW56690.1"/>
    <property type="molecule type" value="mRNA"/>
</dbReference>
<dbReference type="EMBL" id="AK294548">
    <property type="protein sequence ID" value="BAH11804.1"/>
    <property type="molecule type" value="mRNA"/>
</dbReference>
<dbReference type="EMBL" id="AK295672">
    <property type="protein sequence ID" value="BAG58530.1"/>
    <property type="molecule type" value="mRNA"/>
</dbReference>
<dbReference type="EMBL" id="AK295728">
    <property type="protein sequence ID" value="BAG58569.1"/>
    <property type="molecule type" value="mRNA"/>
</dbReference>
<dbReference type="EMBL" id="AK299343">
    <property type="protein sequence ID" value="BAG61344.1"/>
    <property type="molecule type" value="mRNA"/>
</dbReference>
<dbReference type="EMBL" id="AB210000">
    <property type="protein sequence ID" value="BAE06082.1"/>
    <property type="status" value="ALT_INIT"/>
    <property type="molecule type" value="mRNA"/>
</dbReference>
<dbReference type="EMBL" id="AC005600">
    <property type="protein sequence ID" value="AAC34210.1"/>
    <property type="molecule type" value="Genomic_DNA"/>
</dbReference>
<dbReference type="EMBL" id="AC093513">
    <property type="status" value="NOT_ANNOTATED_CDS"/>
    <property type="molecule type" value="Genomic_DNA"/>
</dbReference>
<dbReference type="EMBL" id="CH471112">
    <property type="protein sequence ID" value="EAW85556.1"/>
    <property type="molecule type" value="Genomic_DNA"/>
</dbReference>
<dbReference type="EMBL" id="BC150300">
    <property type="protein sequence ID" value="AAI50301.1"/>
    <property type="molecule type" value="mRNA"/>
</dbReference>
<dbReference type="EMBL" id="BC025364">
    <property type="protein sequence ID" value="AAH25364.1"/>
    <property type="molecule type" value="mRNA"/>
</dbReference>
<dbReference type="EMBL" id="BC046929">
    <property type="protein sequence ID" value="AAH46929.1"/>
    <property type="molecule type" value="mRNA"/>
</dbReference>
<dbReference type="EMBL" id="AB014460">
    <property type="protein sequence ID" value="BAA32694.1"/>
    <property type="molecule type" value="Genomic_DNA"/>
</dbReference>
<dbReference type="CCDS" id="CCDS10458.1">
    <molecule id="P49815-1"/>
</dbReference>
<dbReference type="CCDS" id="CCDS10459.1">
    <molecule id="P49815-2"/>
</dbReference>
<dbReference type="CCDS" id="CCDS45384.1">
    <molecule id="P49815-4"/>
</dbReference>
<dbReference type="CCDS" id="CCDS58408.1">
    <molecule id="P49815-5"/>
</dbReference>
<dbReference type="CCDS" id="CCDS81933.1">
    <molecule id="P49815-6"/>
</dbReference>
<dbReference type="CCDS" id="CCDS81934.1">
    <molecule id="P49815-7"/>
</dbReference>
<dbReference type="CCDS" id="CCDS92086.1">
    <molecule id="P49815-3"/>
</dbReference>
<dbReference type="PIR" id="A49420">
    <property type="entry name" value="A49420"/>
</dbReference>
<dbReference type="RefSeq" id="NP_000539.2">
    <molecule id="P49815-1"/>
    <property type="nucleotide sequence ID" value="NM_000548.5"/>
</dbReference>
<dbReference type="RefSeq" id="NP_001070651.1">
    <molecule id="P49815-5"/>
    <property type="nucleotide sequence ID" value="NM_001077183.3"/>
</dbReference>
<dbReference type="RefSeq" id="NP_001107854.1">
    <molecule id="P49815-4"/>
    <property type="nucleotide sequence ID" value="NM_001114382.3"/>
</dbReference>
<dbReference type="RefSeq" id="NP_001305756.1">
    <molecule id="P49815-6"/>
    <property type="nucleotide sequence ID" value="NM_001318827.2"/>
</dbReference>
<dbReference type="RefSeq" id="NP_001305758.1">
    <molecule id="P49815-7"/>
    <property type="nucleotide sequence ID" value="NM_001318829.2"/>
</dbReference>
<dbReference type="RefSeq" id="NP_001305760.1">
    <property type="nucleotide sequence ID" value="NM_001318831.1"/>
</dbReference>
<dbReference type="RefSeq" id="NP_001305761.1">
    <property type="nucleotide sequence ID" value="NM_001318832.1"/>
</dbReference>
<dbReference type="RefSeq" id="NP_001357333.1">
    <molecule id="P49815-3"/>
    <property type="nucleotide sequence ID" value="NM_001370404.1"/>
</dbReference>
<dbReference type="RefSeq" id="NP_066399.2">
    <molecule id="P49815-2"/>
    <property type="nucleotide sequence ID" value="NM_021055.3"/>
</dbReference>
<dbReference type="RefSeq" id="XP_005255586.2">
    <property type="nucleotide sequence ID" value="XM_005255529.4"/>
</dbReference>
<dbReference type="RefSeq" id="XP_016879105.1">
    <property type="nucleotide sequence ID" value="XM_017023616.1"/>
</dbReference>
<dbReference type="PDB" id="7DL2">
    <property type="method" value="EM"/>
    <property type="resolution" value="4.40 A"/>
    <property type="chains" value="A/B=50-1807"/>
</dbReference>
<dbReference type="PDB" id="9CE3">
    <property type="method" value="EM"/>
    <property type="resolution" value="2.90 A"/>
    <property type="chains" value="A/B=2-1807"/>
</dbReference>
<dbReference type="PDBsum" id="7DL2"/>
<dbReference type="PDBsum" id="9CE3"/>
<dbReference type="EMDB" id="EMD-11816"/>
<dbReference type="EMDB" id="EMD-11817"/>
<dbReference type="EMDB" id="EMD-11819"/>
<dbReference type="EMDB" id="EMD-30708"/>
<dbReference type="EMDB" id="EMD-45492"/>
<dbReference type="SMR" id="P49815"/>
<dbReference type="BioGRID" id="113100">
    <property type="interactions" value="196"/>
</dbReference>
<dbReference type="ComplexPortal" id="CPX-6142">
    <property type="entry name" value="TSC1-TSC2 complex"/>
</dbReference>
<dbReference type="CORUM" id="P49815"/>
<dbReference type="FunCoup" id="P49815">
    <property type="interactions" value="3284"/>
</dbReference>
<dbReference type="IntAct" id="P49815">
    <property type="interactions" value="85"/>
</dbReference>
<dbReference type="MINT" id="P49815"/>
<dbReference type="STRING" id="9606.ENSP00000219476"/>
<dbReference type="GlyGen" id="P49815">
    <property type="glycosylation" value="2 sites, 1 O-linked glycan (1 site)"/>
</dbReference>
<dbReference type="iPTMnet" id="P49815"/>
<dbReference type="PhosphoSitePlus" id="P49815"/>
<dbReference type="SwissPalm" id="P49815"/>
<dbReference type="BioMuta" id="TSC2"/>
<dbReference type="DMDM" id="269849475"/>
<dbReference type="jPOST" id="P49815"/>
<dbReference type="MassIVE" id="P49815"/>
<dbReference type="PaxDb" id="9606-ENSP00000219476"/>
<dbReference type="PeptideAtlas" id="P49815"/>
<dbReference type="ProteomicsDB" id="4311"/>
<dbReference type="ProteomicsDB" id="56142">
    <molecule id="P49815-1"/>
</dbReference>
<dbReference type="ProteomicsDB" id="56143">
    <molecule id="P49815-2"/>
</dbReference>
<dbReference type="ProteomicsDB" id="56144">
    <molecule id="P49815-3"/>
</dbReference>
<dbReference type="ProteomicsDB" id="56145">
    <molecule id="P49815-4"/>
</dbReference>
<dbReference type="ProteomicsDB" id="56146">
    <molecule id="P49815-5"/>
</dbReference>
<dbReference type="ProteomicsDB" id="56147">
    <molecule id="P49815-6"/>
</dbReference>
<dbReference type="Pumba" id="P49815"/>
<dbReference type="ABCD" id="P49815">
    <property type="antibodies" value="1 sequenced antibody"/>
</dbReference>
<dbReference type="Antibodypedia" id="3702">
    <property type="antibodies" value="2007 antibodies from 45 providers"/>
</dbReference>
<dbReference type="DNASU" id="7249"/>
<dbReference type="Ensembl" id="ENST00000219476.9">
    <molecule id="P49815-1"/>
    <property type="protein sequence ID" value="ENSP00000219476.3"/>
    <property type="gene ID" value="ENSG00000103197.20"/>
</dbReference>
<dbReference type="Ensembl" id="ENST00000350773.9">
    <molecule id="P49815-4"/>
    <property type="protein sequence ID" value="ENSP00000344383.4"/>
    <property type="gene ID" value="ENSG00000103197.20"/>
</dbReference>
<dbReference type="Ensembl" id="ENST00000382538.10">
    <molecule id="P49815-7"/>
    <property type="protein sequence ID" value="ENSP00000371978.6"/>
    <property type="gene ID" value="ENSG00000103197.20"/>
</dbReference>
<dbReference type="Ensembl" id="ENST00000401874.7">
    <molecule id="P49815-5"/>
    <property type="protein sequence ID" value="ENSP00000384468.2"/>
    <property type="gene ID" value="ENSG00000103197.20"/>
</dbReference>
<dbReference type="Ensembl" id="ENST00000439673.6">
    <molecule id="P49815-6"/>
    <property type="protein sequence ID" value="ENSP00000399232.2"/>
    <property type="gene ID" value="ENSG00000103197.20"/>
</dbReference>
<dbReference type="Ensembl" id="ENST00000642936.1">
    <molecule id="P49815-3"/>
    <property type="protein sequence ID" value="ENSP00000494514.1"/>
    <property type="gene ID" value="ENSG00000103197.20"/>
</dbReference>
<dbReference type="Ensembl" id="ENST00000644043.1">
    <molecule id="P49815-2"/>
    <property type="protein sequence ID" value="ENSP00000496262.1"/>
    <property type="gene ID" value="ENSG00000103197.20"/>
</dbReference>
<dbReference type="GeneID" id="7249"/>
<dbReference type="KEGG" id="hsa:7249"/>
<dbReference type="MANE-Select" id="ENST00000219476.9">
    <property type="protein sequence ID" value="ENSP00000219476.3"/>
    <property type="RefSeq nucleotide sequence ID" value="NM_000548.5"/>
    <property type="RefSeq protein sequence ID" value="NP_000539.2"/>
</dbReference>
<dbReference type="UCSC" id="uc002con.4">
    <molecule id="P49815-1"/>
    <property type="organism name" value="human"/>
</dbReference>
<dbReference type="AGR" id="HGNC:12363"/>
<dbReference type="CTD" id="7249"/>
<dbReference type="DisGeNET" id="7249"/>
<dbReference type="GeneCards" id="TSC2"/>
<dbReference type="GeneReviews" id="TSC2"/>
<dbReference type="HGNC" id="HGNC:12363">
    <property type="gene designation" value="TSC2"/>
</dbReference>
<dbReference type="HPA" id="ENSG00000103197">
    <property type="expression patterns" value="Low tissue specificity"/>
</dbReference>
<dbReference type="MalaCards" id="TSC2"/>
<dbReference type="MIM" id="191092">
    <property type="type" value="gene"/>
</dbReference>
<dbReference type="MIM" id="606690">
    <property type="type" value="phenotype"/>
</dbReference>
<dbReference type="MIM" id="607341">
    <property type="type" value="phenotype"/>
</dbReference>
<dbReference type="MIM" id="613254">
    <property type="type" value="phenotype"/>
</dbReference>
<dbReference type="neXtProt" id="NX_P49815"/>
<dbReference type="OpenTargets" id="ENSG00000103197"/>
<dbReference type="Orphanet" id="210159">
    <property type="disease" value="Adult hepatocellular carcinoma"/>
</dbReference>
<dbReference type="Orphanet" id="88924">
    <property type="disease" value="Autosomal dominant polycystic kidney disease type 1 with tuberous sclerosis"/>
</dbReference>
<dbReference type="Orphanet" id="269001">
    <property type="disease" value="Isolated focal cortical dysplasia type IIa"/>
</dbReference>
<dbReference type="Orphanet" id="269008">
    <property type="disease" value="Isolated focal cortical dysplasia type IIb"/>
</dbReference>
<dbReference type="Orphanet" id="538">
    <property type="disease" value="Lymphangioleiomyomatosis"/>
</dbReference>
<dbReference type="Orphanet" id="805">
    <property type="disease" value="Tuberous sclerosis complex"/>
</dbReference>
<dbReference type="PharmGKB" id="PA37035"/>
<dbReference type="VEuPathDB" id="HostDB:ENSG00000103197"/>
<dbReference type="eggNOG" id="KOG3687">
    <property type="taxonomic scope" value="Eukaryota"/>
</dbReference>
<dbReference type="GeneTree" id="ENSGT00950000183139"/>
<dbReference type="HOGENOM" id="CLU_001122_0_0_1"/>
<dbReference type="InParanoid" id="P49815"/>
<dbReference type="OMA" id="CDIMSAI"/>
<dbReference type="OrthoDB" id="5797019at2759"/>
<dbReference type="PAN-GO" id="P49815">
    <property type="GO annotations" value="8 GO annotations based on evolutionary models"/>
</dbReference>
<dbReference type="PhylomeDB" id="P49815"/>
<dbReference type="TreeFam" id="TF324484"/>
<dbReference type="PathwayCommons" id="P49815"/>
<dbReference type="Reactome" id="R-HSA-1632852">
    <property type="pathway name" value="Macroautophagy"/>
</dbReference>
<dbReference type="Reactome" id="R-HSA-165181">
    <property type="pathway name" value="Inhibition of TSC complex formation by PKB"/>
</dbReference>
<dbReference type="Reactome" id="R-HSA-198323">
    <property type="pathway name" value="AKT phosphorylates targets in the cytosol"/>
</dbReference>
<dbReference type="Reactome" id="R-HSA-380972">
    <property type="pathway name" value="Energy dependent regulation of mTOR by LKB1-AMPK"/>
</dbReference>
<dbReference type="Reactome" id="R-HSA-5628897">
    <property type="pathway name" value="TP53 Regulates Metabolic Genes"/>
</dbReference>
<dbReference type="Reactome" id="R-HSA-5674400">
    <property type="pathway name" value="Constitutive Signaling by AKT1 E17K in Cancer"/>
</dbReference>
<dbReference type="Reactome" id="R-HSA-8854214">
    <property type="pathway name" value="TBC/RABGAPs"/>
</dbReference>
<dbReference type="SABIO-RK" id="P49815"/>
<dbReference type="SignaLink" id="P49815"/>
<dbReference type="SIGNOR" id="P49815"/>
<dbReference type="BioGRID-ORCS" id="7249">
    <property type="hits" value="152 hits in 1188 CRISPR screens"/>
</dbReference>
<dbReference type="CD-CODE" id="8C2F96ED">
    <property type="entry name" value="Centrosome"/>
</dbReference>
<dbReference type="CD-CODE" id="FB4E32DD">
    <property type="entry name" value="Presynaptic clusters and postsynaptic densities"/>
</dbReference>
<dbReference type="ChiTaRS" id="TSC2">
    <property type="organism name" value="human"/>
</dbReference>
<dbReference type="GeneWiki" id="TSC2"/>
<dbReference type="GenomeRNAi" id="7249"/>
<dbReference type="Pharos" id="P49815">
    <property type="development level" value="Tbio"/>
</dbReference>
<dbReference type="PRO" id="PR:P49815"/>
<dbReference type="Proteomes" id="UP000005640">
    <property type="component" value="Chromosome 16"/>
</dbReference>
<dbReference type="RNAct" id="P49815">
    <property type="molecule type" value="protein"/>
</dbReference>
<dbReference type="Bgee" id="ENSG00000103197">
    <property type="expression patterns" value="Expressed in right hemisphere of cerebellum and 187 other cell types or tissues"/>
</dbReference>
<dbReference type="ExpressionAtlas" id="P49815">
    <property type="expression patterns" value="baseline and differential"/>
</dbReference>
<dbReference type="GO" id="GO:0005737">
    <property type="term" value="C:cytoplasm"/>
    <property type="evidence" value="ECO:0000314"/>
    <property type="project" value="UniProtKB"/>
</dbReference>
<dbReference type="GO" id="GO:0005829">
    <property type="term" value="C:cytosol"/>
    <property type="evidence" value="ECO:0000314"/>
    <property type="project" value="HPA"/>
</dbReference>
<dbReference type="GO" id="GO:0005794">
    <property type="term" value="C:Golgi apparatus"/>
    <property type="evidence" value="ECO:0000314"/>
    <property type="project" value="UniProtKB"/>
</dbReference>
<dbReference type="GO" id="GO:0005765">
    <property type="term" value="C:lysosomal membrane"/>
    <property type="evidence" value="ECO:0000314"/>
    <property type="project" value="UniProtKB"/>
</dbReference>
<dbReference type="GO" id="GO:0005764">
    <property type="term" value="C:lysosome"/>
    <property type="evidence" value="ECO:0000314"/>
    <property type="project" value="UniProtKB"/>
</dbReference>
<dbReference type="GO" id="GO:0016020">
    <property type="term" value="C:membrane"/>
    <property type="evidence" value="ECO:0000314"/>
    <property type="project" value="UniProtKB"/>
</dbReference>
<dbReference type="GO" id="GO:0005634">
    <property type="term" value="C:nucleus"/>
    <property type="evidence" value="ECO:0000314"/>
    <property type="project" value="UniProtKB"/>
</dbReference>
<dbReference type="GO" id="GO:0048471">
    <property type="term" value="C:perinuclear region of cytoplasm"/>
    <property type="evidence" value="ECO:0000314"/>
    <property type="project" value="UniProtKB"/>
</dbReference>
<dbReference type="GO" id="GO:0014069">
    <property type="term" value="C:postsynaptic density"/>
    <property type="evidence" value="ECO:0000314"/>
    <property type="project" value="SynGO"/>
</dbReference>
<dbReference type="GO" id="GO:0033596">
    <property type="term" value="C:TSC1-TSC2 complex"/>
    <property type="evidence" value="ECO:0000314"/>
    <property type="project" value="UniProtKB"/>
</dbReference>
<dbReference type="GO" id="GO:0005096">
    <property type="term" value="F:GTPase activator activity"/>
    <property type="evidence" value="ECO:0000314"/>
    <property type="project" value="UniProtKB"/>
</dbReference>
<dbReference type="GO" id="GO:0051879">
    <property type="term" value="F:Hsp90 protein binding"/>
    <property type="evidence" value="ECO:0000353"/>
    <property type="project" value="UniProtKB"/>
</dbReference>
<dbReference type="GO" id="GO:0019902">
    <property type="term" value="F:phosphatase binding"/>
    <property type="evidence" value="ECO:0000314"/>
    <property type="project" value="UniProtKB"/>
</dbReference>
<dbReference type="GO" id="GO:0042803">
    <property type="term" value="F:protein homodimerization activity"/>
    <property type="evidence" value="ECO:0000353"/>
    <property type="project" value="UniProtKB"/>
</dbReference>
<dbReference type="GO" id="GO:0031267">
    <property type="term" value="F:small GTPase binding"/>
    <property type="evidence" value="ECO:0000353"/>
    <property type="project" value="UniProtKB"/>
</dbReference>
<dbReference type="GO" id="GO:0043276">
    <property type="term" value="P:anoikis"/>
    <property type="evidence" value="ECO:0000316"/>
    <property type="project" value="ParkinsonsUK-UCL"/>
</dbReference>
<dbReference type="GO" id="GO:0009267">
    <property type="term" value="P:cellular response to starvation"/>
    <property type="evidence" value="ECO:0000314"/>
    <property type="project" value="UniProtKB"/>
</dbReference>
<dbReference type="GO" id="GO:0006897">
    <property type="term" value="P:endocytosis"/>
    <property type="evidence" value="ECO:0000304"/>
    <property type="project" value="ProtInc"/>
</dbReference>
<dbReference type="GO" id="GO:0007507">
    <property type="term" value="P:heart development"/>
    <property type="evidence" value="ECO:0000250"/>
    <property type="project" value="UniProtKB"/>
</dbReference>
<dbReference type="GO" id="GO:0008285">
    <property type="term" value="P:negative regulation of cell population proliferation"/>
    <property type="evidence" value="ECO:0000250"/>
    <property type="project" value="UniProtKB"/>
</dbReference>
<dbReference type="GO" id="GO:0046627">
    <property type="term" value="P:negative regulation of insulin receptor signaling pathway"/>
    <property type="evidence" value="ECO:0000318"/>
    <property type="project" value="GO_Central"/>
</dbReference>
<dbReference type="GO" id="GO:1901525">
    <property type="term" value="P:negative regulation of mitophagy"/>
    <property type="evidence" value="ECO:0000303"/>
    <property type="project" value="ParkinsonsUK-UCL"/>
</dbReference>
<dbReference type="GO" id="GO:0051898">
    <property type="term" value="P:negative regulation of phosphatidylinositol 3-kinase/protein kinase B signal transduction"/>
    <property type="evidence" value="ECO:0000250"/>
    <property type="project" value="UniProtKB"/>
</dbReference>
<dbReference type="GO" id="GO:0032007">
    <property type="term" value="P:negative regulation of TOR signaling"/>
    <property type="evidence" value="ECO:0000314"/>
    <property type="project" value="ComplexPortal"/>
</dbReference>
<dbReference type="GO" id="GO:1904262">
    <property type="term" value="P:negative regulation of TORC1 signaling"/>
    <property type="evidence" value="ECO:0000314"/>
    <property type="project" value="UniProtKB"/>
</dbReference>
<dbReference type="GO" id="GO:0030178">
    <property type="term" value="P:negative regulation of Wnt signaling pathway"/>
    <property type="evidence" value="ECO:0000318"/>
    <property type="project" value="GO_Central"/>
</dbReference>
<dbReference type="GO" id="GO:0001843">
    <property type="term" value="P:neural tube closure"/>
    <property type="evidence" value="ECO:0000250"/>
    <property type="project" value="UniProtKB"/>
</dbReference>
<dbReference type="GO" id="GO:0050918">
    <property type="term" value="P:positive chemotaxis"/>
    <property type="evidence" value="ECO:0000250"/>
    <property type="project" value="UniProtKB"/>
</dbReference>
<dbReference type="GO" id="GO:0016239">
    <property type="term" value="P:positive regulation of macroautophagy"/>
    <property type="evidence" value="ECO:0000316"/>
    <property type="project" value="ParkinsonsUK-UCL"/>
</dbReference>
<dbReference type="GO" id="GO:0006606">
    <property type="term" value="P:protein import into nucleus"/>
    <property type="evidence" value="ECO:0000250"/>
    <property type="project" value="UniProtKB"/>
</dbReference>
<dbReference type="GO" id="GO:0008104">
    <property type="term" value="P:protein localization"/>
    <property type="evidence" value="ECO:0000250"/>
    <property type="project" value="UniProtKB"/>
</dbReference>
<dbReference type="GO" id="GO:0051726">
    <property type="term" value="P:regulation of cell cycle"/>
    <property type="evidence" value="ECO:0000318"/>
    <property type="project" value="GO_Central"/>
</dbReference>
<dbReference type="GO" id="GO:0030100">
    <property type="term" value="P:regulation of endocytosis"/>
    <property type="evidence" value="ECO:0000250"/>
    <property type="project" value="UniProtKB"/>
</dbReference>
<dbReference type="GO" id="GO:0046626">
    <property type="term" value="P:regulation of insulin receptor signaling pathway"/>
    <property type="evidence" value="ECO:0000250"/>
    <property type="project" value="UniProtKB"/>
</dbReference>
<dbReference type="GO" id="GO:0051056">
    <property type="term" value="P:regulation of small GTPase mediated signal transduction"/>
    <property type="evidence" value="ECO:0007669"/>
    <property type="project" value="InterPro"/>
</dbReference>
<dbReference type="GO" id="GO:0016192">
    <property type="term" value="P:vesicle-mediated transport"/>
    <property type="evidence" value="ECO:0000304"/>
    <property type="project" value="ProtInc"/>
</dbReference>
<dbReference type="FunFam" id="3.40.50.11210:FF:000004">
    <property type="entry name" value="Tuberin isoform X3"/>
    <property type="match status" value="1"/>
</dbReference>
<dbReference type="Gene3D" id="1.25.10.10">
    <property type="entry name" value="Leucine-rich Repeat Variant"/>
    <property type="match status" value="1"/>
</dbReference>
<dbReference type="Gene3D" id="3.40.50.11210">
    <property type="entry name" value="Rap/Ran-GAP"/>
    <property type="match status" value="1"/>
</dbReference>
<dbReference type="InterPro" id="IPR011989">
    <property type="entry name" value="ARM-like"/>
</dbReference>
<dbReference type="InterPro" id="IPR016024">
    <property type="entry name" value="ARM-type_fold"/>
</dbReference>
<dbReference type="InterPro" id="IPR035974">
    <property type="entry name" value="Rap/Ran-GAP_sf"/>
</dbReference>
<dbReference type="InterPro" id="IPR000331">
    <property type="entry name" value="Rap/Ran_GAP_dom"/>
</dbReference>
<dbReference type="InterPro" id="IPR003913">
    <property type="entry name" value="Tuberin"/>
</dbReference>
<dbReference type="InterPro" id="IPR018515">
    <property type="entry name" value="Tuberin-type_domain"/>
</dbReference>
<dbReference type="InterPro" id="IPR027107">
    <property type="entry name" value="Tuberin/Ral-act_asu"/>
</dbReference>
<dbReference type="InterPro" id="IPR024584">
    <property type="entry name" value="Tuberin_N"/>
</dbReference>
<dbReference type="PANTHER" id="PTHR10063">
    <property type="entry name" value="TUBERIN"/>
    <property type="match status" value="1"/>
</dbReference>
<dbReference type="PANTHER" id="PTHR10063:SF0">
    <property type="entry name" value="TUBERIN"/>
    <property type="match status" value="1"/>
</dbReference>
<dbReference type="Pfam" id="PF11864">
    <property type="entry name" value="DUF3384"/>
    <property type="match status" value="1"/>
</dbReference>
<dbReference type="Pfam" id="PF02145">
    <property type="entry name" value="Rap_GAP"/>
    <property type="match status" value="1"/>
</dbReference>
<dbReference type="Pfam" id="PF03542">
    <property type="entry name" value="Tuberin"/>
    <property type="match status" value="1"/>
</dbReference>
<dbReference type="PRINTS" id="PR01431">
    <property type="entry name" value="TUBERIN"/>
</dbReference>
<dbReference type="SUPFAM" id="SSF48371">
    <property type="entry name" value="ARM repeat"/>
    <property type="match status" value="1"/>
</dbReference>
<dbReference type="SUPFAM" id="SSF111347">
    <property type="entry name" value="Rap/Ran-GAP"/>
    <property type="match status" value="1"/>
</dbReference>
<dbReference type="PROSITE" id="PS50085">
    <property type="entry name" value="RAPGAP"/>
    <property type="match status" value="1"/>
</dbReference>